<protein>
    <recommendedName>
        <fullName>Pyruvate kinase PKM</fullName>
        <ecNumber evidence="8 15 16">2.7.1.40</ecNumber>
    </recommendedName>
    <alternativeName>
        <fullName evidence="35">Cytosolic thyroid hormone-binding protein</fullName>
        <shortName evidence="35">CTHBP</shortName>
    </alternativeName>
    <alternativeName>
        <fullName evidence="37">Opa-interacting protein 3</fullName>
        <shortName evidence="37">OIP-3</shortName>
    </alternativeName>
    <alternativeName>
        <fullName>Pyruvate kinase 2/3</fullName>
    </alternativeName>
    <alternativeName>
        <fullName>Pyruvate kinase muscle isozyme</fullName>
    </alternativeName>
    <alternativeName>
        <fullName evidence="38">Threonine-protein kinase PKM2</fullName>
        <ecNumber evidence="22 25">2.7.11.1</ecNumber>
    </alternativeName>
    <alternativeName>
        <fullName>Thyroid hormone-binding protein 1</fullName>
        <shortName>THBP1</shortName>
    </alternativeName>
    <alternativeName>
        <fullName>Tumor M2-PK</fullName>
    </alternativeName>
    <alternativeName>
        <fullName evidence="38">Tyrosine-protein kinase PKM2</fullName>
        <ecNumber evidence="21 25">2.7.10.2</ecNumber>
    </alternativeName>
    <alternativeName>
        <fullName>p58</fullName>
    </alternativeName>
</protein>
<name>KPYM_HUMAN</name>
<sequence length="531" mass="57937">MSKPHSEAGTAFIQTQQLHAAMADTFLEHMCRLDIDSPPITARNTGIICTIGPASRSVETLKEMIKSGMNVARLNFSHGTHEYHAETIKNVRTATESFASDPILYRPVAVALDTKGPEIRTGLIKGSGTAEVELKKGATLKITLDNAYMEKCDENILWLDYKNICKVVEVGSKIYVDDGLISLQVKQKGADFLVTEVENGGSLGSKKGVNLPGAAVDLPAVSEKDIQDLKFGVEQDVDMVFASFIRKASDVHEVRKVLGEKGKNIKIISKIENHEGVRRFDEILEASDGIMVARGDLGIEIPAEKVFLAQKMMIGRCNRAGKPVICATQMLESMIKKPRPTRAEGSDVANAVLDGADCIMLSGETAKGDYPLEAVRMQHLIAREAEAAIYHLQLFEELRRLAPITSDPTEATAVGAVEASFKCCSGAIIVLTKSGRSAHQVARYRPRAPIIAVTRNPQTARQAHLYRGIFPVLCKDPVQEAWAEDVDLRVNFAMNVGKARGFFKKGDVVIVLTGWRPGSGFTNTMRVVPVP</sequence>
<keyword id="KW-0002">3D-structure</keyword>
<keyword id="KW-0007">Acetylation</keyword>
<keyword id="KW-0021">Allosteric enzyme</keyword>
<keyword id="KW-0025">Alternative splicing</keyword>
<keyword id="KW-0067">ATP-binding</keyword>
<keyword id="KW-0963">Cytoplasm</keyword>
<keyword id="KW-0903">Direct protein sequencing</keyword>
<keyword id="KW-0324">Glycolysis</keyword>
<keyword id="KW-0379">Hydroxylation</keyword>
<keyword id="KW-1017">Isopeptide bond</keyword>
<keyword id="KW-0418">Kinase</keyword>
<keyword id="KW-0460">Magnesium</keyword>
<keyword id="KW-0479">Metal-binding</keyword>
<keyword id="KW-0488">Methylation</keyword>
<keyword id="KW-0547">Nucleotide-binding</keyword>
<keyword id="KW-0539">Nucleus</keyword>
<keyword id="KW-0597">Phosphoprotein</keyword>
<keyword id="KW-0630">Potassium</keyword>
<keyword id="KW-1267">Proteomics identification</keyword>
<keyword id="KW-0670">Pyruvate</keyword>
<keyword id="KW-1185">Reference proteome</keyword>
<keyword id="KW-0702">S-nitrosylation</keyword>
<keyword id="KW-0808">Transferase</keyword>
<keyword id="KW-0810">Translation regulation</keyword>
<keyword id="KW-0832">Ubl conjugation</keyword>
<dbReference type="EC" id="2.7.1.40" evidence="8 15 16"/>
<dbReference type="EC" id="2.7.11.1" evidence="22 25"/>
<dbReference type="EC" id="2.7.10.2" evidence="21 25"/>
<dbReference type="EMBL" id="M23725">
    <property type="protein sequence ID" value="AAA36449.1"/>
    <property type="molecule type" value="mRNA"/>
</dbReference>
<dbReference type="EMBL" id="M26252">
    <property type="protein sequence ID" value="AAA36672.1"/>
    <property type="molecule type" value="mRNA"/>
</dbReference>
<dbReference type="EMBL" id="X56494">
    <property type="protein sequence ID" value="CAA39849.1"/>
    <property type="molecule type" value="Genomic_DNA"/>
</dbReference>
<dbReference type="EMBL" id="AK092369">
    <property type="protein sequence ID" value="BAG52542.1"/>
    <property type="molecule type" value="mRNA"/>
</dbReference>
<dbReference type="EMBL" id="AK222927">
    <property type="protein sequence ID" value="BAD96647.1"/>
    <property type="molecule type" value="mRNA"/>
</dbReference>
<dbReference type="EMBL" id="AK294315">
    <property type="protein sequence ID" value="BAG57589.1"/>
    <property type="status" value="ALT_INIT"/>
    <property type="molecule type" value="mRNA"/>
</dbReference>
<dbReference type="EMBL" id="AK300800">
    <property type="protein sequence ID" value="BAG62458.1"/>
    <property type="molecule type" value="mRNA"/>
</dbReference>
<dbReference type="EMBL" id="AK312253">
    <property type="protein sequence ID" value="BAG35185.1"/>
    <property type="molecule type" value="mRNA"/>
</dbReference>
<dbReference type="EMBL" id="AY352517">
    <property type="protein sequence ID" value="AAQ15274.1"/>
    <property type="molecule type" value="Genomic_DNA"/>
</dbReference>
<dbReference type="EMBL" id="AC020779">
    <property type="status" value="NOT_ANNOTATED_CDS"/>
    <property type="molecule type" value="Genomic_DNA"/>
</dbReference>
<dbReference type="EMBL" id="CH471082">
    <property type="protein sequence ID" value="EAW77884.1"/>
    <property type="molecule type" value="Genomic_DNA"/>
</dbReference>
<dbReference type="EMBL" id="CH471082">
    <property type="protein sequence ID" value="EAW77888.1"/>
    <property type="molecule type" value="Genomic_DNA"/>
</dbReference>
<dbReference type="EMBL" id="BC000481">
    <property type="protein sequence ID" value="AAH00481.3"/>
    <property type="molecule type" value="mRNA"/>
</dbReference>
<dbReference type="EMBL" id="BC007640">
    <property type="protein sequence ID" value="AAH07640.1"/>
    <property type="molecule type" value="mRNA"/>
</dbReference>
<dbReference type="EMBL" id="BC007952">
    <property type="protein sequence ID" value="AAH07952.3"/>
    <property type="molecule type" value="mRNA"/>
</dbReference>
<dbReference type="EMBL" id="BC012811">
    <property type="protein sequence ID" value="AAH12811.3"/>
    <property type="molecule type" value="mRNA"/>
</dbReference>
<dbReference type="EMBL" id="BC035198">
    <property type="protein sequence ID" value="AAH35198.1"/>
    <property type="molecule type" value="mRNA"/>
</dbReference>
<dbReference type="EMBL" id="AF025439">
    <property type="protein sequence ID" value="AAC39559.1"/>
    <property type="molecule type" value="mRNA"/>
</dbReference>
<dbReference type="CCDS" id="CCDS32284.1">
    <molecule id="P14618-1"/>
</dbReference>
<dbReference type="CCDS" id="CCDS32285.1">
    <molecule id="P14618-2"/>
</dbReference>
<dbReference type="PIR" id="S30038">
    <property type="entry name" value="S30038"/>
</dbReference>
<dbReference type="PIR" id="S64635">
    <property type="entry name" value="S64635"/>
</dbReference>
<dbReference type="RefSeq" id="NP_001193725.1">
    <property type="nucleotide sequence ID" value="NM_001206796.2"/>
</dbReference>
<dbReference type="RefSeq" id="NP_001193726.1">
    <property type="nucleotide sequence ID" value="NM_001206797.2"/>
</dbReference>
<dbReference type="RefSeq" id="NP_001193727.1">
    <molecule id="P14618-3"/>
    <property type="nucleotide sequence ID" value="NM_001206798.3"/>
</dbReference>
<dbReference type="RefSeq" id="NP_001193728.1">
    <property type="nucleotide sequence ID" value="NM_001206799.1"/>
</dbReference>
<dbReference type="RefSeq" id="NP_001303247.1">
    <property type="nucleotide sequence ID" value="NM_001316318.1"/>
</dbReference>
<dbReference type="RefSeq" id="NP_002645.3">
    <molecule id="P14618-1"/>
    <property type="nucleotide sequence ID" value="NM_002654.5"/>
</dbReference>
<dbReference type="RefSeq" id="NP_872270.1">
    <molecule id="P14618-2"/>
    <property type="nucleotide sequence ID" value="NM_182470.4"/>
</dbReference>
<dbReference type="RefSeq" id="NP_872271.1">
    <molecule id="P14618-2"/>
    <property type="nucleotide sequence ID" value="NM_182471.4"/>
</dbReference>
<dbReference type="RefSeq" id="XP_005254502.1">
    <molecule id="P14618-1"/>
    <property type="nucleotide sequence ID" value="XM_005254445.6"/>
</dbReference>
<dbReference type="RefSeq" id="XP_016877802.1">
    <property type="nucleotide sequence ID" value="XM_017022313.1"/>
</dbReference>
<dbReference type="RefSeq" id="XP_047288622.1">
    <molecule id="P14618-1"/>
    <property type="nucleotide sequence ID" value="XM_047432666.1"/>
</dbReference>
<dbReference type="PDB" id="1T5A">
    <property type="method" value="X-ray"/>
    <property type="resolution" value="2.80 A"/>
    <property type="chains" value="A/B/C/D=1-531"/>
</dbReference>
<dbReference type="PDB" id="1ZJH">
    <property type="method" value="X-ray"/>
    <property type="resolution" value="2.20 A"/>
    <property type="chains" value="A=3-531"/>
</dbReference>
<dbReference type="PDB" id="3BJF">
    <property type="method" value="X-ray"/>
    <property type="resolution" value="2.03 A"/>
    <property type="chains" value="A/B/C/D=14-531"/>
</dbReference>
<dbReference type="PDB" id="3BJT">
    <property type="method" value="X-ray"/>
    <property type="resolution" value="2.50 A"/>
    <property type="chains" value="A/B/C/D=2-531"/>
</dbReference>
<dbReference type="PDB" id="3G2G">
    <property type="method" value="X-ray"/>
    <property type="resolution" value="2.00 A"/>
    <property type="chains" value="A/B/C/D=1-531"/>
</dbReference>
<dbReference type="PDB" id="3GQY">
    <property type="method" value="X-ray"/>
    <property type="resolution" value="1.85 A"/>
    <property type="chains" value="A/B/C/D=1-531"/>
</dbReference>
<dbReference type="PDB" id="3GR4">
    <property type="method" value="X-ray"/>
    <property type="resolution" value="1.60 A"/>
    <property type="chains" value="A/B/C/D=1-531"/>
</dbReference>
<dbReference type="PDB" id="3H6O">
    <property type="method" value="X-ray"/>
    <property type="resolution" value="2.00 A"/>
    <property type="chains" value="A/B/C/D=1-531"/>
</dbReference>
<dbReference type="PDB" id="3ME3">
    <property type="method" value="X-ray"/>
    <property type="resolution" value="1.95 A"/>
    <property type="chains" value="A/B/C/D=1-531"/>
</dbReference>
<dbReference type="PDB" id="3SRD">
    <property type="method" value="X-ray"/>
    <property type="resolution" value="2.90 A"/>
    <property type="chains" value="A/B/C/D=1-531"/>
</dbReference>
<dbReference type="PDB" id="3SRF">
    <property type="method" value="X-ray"/>
    <property type="resolution" value="2.84 A"/>
    <property type="chains" value="A/B/C/D/E/F/G/H=1-531"/>
</dbReference>
<dbReference type="PDB" id="3SRH">
    <property type="method" value="X-ray"/>
    <property type="resolution" value="2.60 A"/>
    <property type="chains" value="A/B/C/D=1-531"/>
</dbReference>
<dbReference type="PDB" id="3U2Z">
    <property type="method" value="X-ray"/>
    <property type="resolution" value="2.10 A"/>
    <property type="chains" value="A/B/C/D=1-531"/>
</dbReference>
<dbReference type="PDB" id="4B2D">
    <property type="method" value="X-ray"/>
    <property type="resolution" value="2.30 A"/>
    <property type="chains" value="A/B/C/D=2-531"/>
</dbReference>
<dbReference type="PDB" id="4FXF">
    <property type="method" value="X-ray"/>
    <property type="resolution" value="2.55 A"/>
    <property type="chains" value="A/B/C/D=1-531"/>
</dbReference>
<dbReference type="PDB" id="4FXJ">
    <property type="method" value="X-ray"/>
    <property type="resolution" value="2.90 A"/>
    <property type="chains" value="A/B/C/D=1-531"/>
</dbReference>
<dbReference type="PDB" id="4G1N">
    <property type="method" value="X-ray"/>
    <property type="resolution" value="2.30 A"/>
    <property type="chains" value="A/B/C/D=14-531"/>
</dbReference>
<dbReference type="PDB" id="4JPG">
    <property type="method" value="X-ray"/>
    <property type="resolution" value="2.33 A"/>
    <property type="chains" value="A/B/C/D=1-531"/>
</dbReference>
<dbReference type="PDB" id="4QG6">
    <property type="method" value="X-ray"/>
    <property type="resolution" value="3.21 A"/>
    <property type="chains" value="A/B/C/D=1-531"/>
</dbReference>
<dbReference type="PDB" id="4QG8">
    <property type="method" value="X-ray"/>
    <property type="resolution" value="2.30 A"/>
    <property type="chains" value="A/B/C/D=1-531"/>
</dbReference>
<dbReference type="PDB" id="4QG9">
    <property type="method" value="X-ray"/>
    <property type="resolution" value="2.38 A"/>
    <property type="chains" value="A/B/C/D=1-531"/>
</dbReference>
<dbReference type="PDB" id="4QGC">
    <property type="method" value="X-ray"/>
    <property type="resolution" value="2.30 A"/>
    <property type="chains" value="A/B/C/D=1-531"/>
</dbReference>
<dbReference type="PDB" id="4RPP">
    <property type="method" value="X-ray"/>
    <property type="resolution" value="2.58 A"/>
    <property type="chains" value="A/B/C/D=1-531"/>
</dbReference>
<dbReference type="PDB" id="4WJ8">
    <property type="method" value="X-ray"/>
    <property type="resolution" value="2.87 A"/>
    <property type="chains" value="A/B/C/D=1-531"/>
</dbReference>
<dbReference type="PDB" id="4YJ5">
    <property type="method" value="X-ray"/>
    <property type="resolution" value="2.41 A"/>
    <property type="chains" value="A/B/C/D=14-531"/>
</dbReference>
<dbReference type="PDB" id="5X0I">
    <property type="method" value="X-ray"/>
    <property type="resolution" value="2.64 A"/>
    <property type="chains" value="A/B/C/D=1-531"/>
</dbReference>
<dbReference type="PDB" id="5X1V">
    <property type="method" value="X-ray"/>
    <property type="resolution" value="2.10 A"/>
    <property type="chains" value="A/B/C/D=1-531"/>
</dbReference>
<dbReference type="PDB" id="5X1W">
    <property type="method" value="X-ray"/>
    <property type="resolution" value="3.00 A"/>
    <property type="chains" value="A/B/C/D=1-531"/>
</dbReference>
<dbReference type="PDB" id="6B6U">
    <property type="method" value="X-ray"/>
    <property type="resolution" value="1.35 A"/>
    <property type="chains" value="A/B=7-531"/>
</dbReference>
<dbReference type="PDB" id="6GG3">
    <property type="method" value="X-ray"/>
    <property type="resolution" value="3.72 A"/>
    <property type="chains" value="A/B/C/D/E/F/G/H/I/J/K/L=1-531"/>
</dbReference>
<dbReference type="PDB" id="6GG4">
    <property type="method" value="X-ray"/>
    <property type="resolution" value="2.46 A"/>
    <property type="chains" value="A/B/C/D=1-531"/>
</dbReference>
<dbReference type="PDB" id="6GG5">
    <property type="method" value="X-ray"/>
    <property type="resolution" value="3.20 A"/>
    <property type="chains" value="A/B/C/D=1-531"/>
</dbReference>
<dbReference type="PDB" id="6GG6">
    <property type="method" value="X-ray"/>
    <property type="resolution" value="2.96 A"/>
    <property type="chains" value="A/B/C/D/E/F/G/H=1-531"/>
</dbReference>
<dbReference type="PDB" id="6JFB">
    <property type="method" value="X-ray"/>
    <property type="resolution" value="2.12 A"/>
    <property type="chains" value="A/B/C/D=1-531"/>
</dbReference>
<dbReference type="PDB" id="6NU1">
    <property type="method" value="X-ray"/>
    <property type="resolution" value="2.25 A"/>
    <property type="chains" value="A/B/C/D=1-531"/>
</dbReference>
<dbReference type="PDB" id="6NU5">
    <property type="method" value="X-ray"/>
    <property type="resolution" value="1.60 A"/>
    <property type="chains" value="A/B=1-531"/>
</dbReference>
<dbReference type="PDB" id="6NUB">
    <property type="method" value="X-ray"/>
    <property type="resolution" value="1.70 A"/>
    <property type="chains" value="A/B=1-531"/>
</dbReference>
<dbReference type="PDB" id="6TTF">
    <property type="method" value="EM"/>
    <property type="resolution" value="3.20 A"/>
    <property type="chains" value="A/B/C/D=2-531"/>
</dbReference>
<dbReference type="PDB" id="6TTH">
    <property type="method" value="EM"/>
    <property type="resolution" value="2.60 A"/>
    <property type="chains" value="A/B/C/D=2-531"/>
</dbReference>
<dbReference type="PDB" id="6TTI">
    <property type="method" value="EM"/>
    <property type="resolution" value="2.50 A"/>
    <property type="chains" value="A/B/C/D=2-531"/>
</dbReference>
<dbReference type="PDB" id="6TTQ">
    <property type="method" value="EM"/>
    <property type="resolution" value="2.70 A"/>
    <property type="chains" value="A/B/C/D=2-531"/>
</dbReference>
<dbReference type="PDB" id="6V74">
    <property type="method" value="X-ray"/>
    <property type="resolution" value="2.32 A"/>
    <property type="chains" value="A/B/C/D=1-531"/>
</dbReference>
<dbReference type="PDB" id="6V75">
    <property type="method" value="X-ray"/>
    <property type="resolution" value="2.85 A"/>
    <property type="chains" value="A/B/C/D=1-531"/>
</dbReference>
<dbReference type="PDB" id="6V76">
    <property type="method" value="X-ray"/>
    <property type="resolution" value="2.75 A"/>
    <property type="chains" value="A/B/C/D=1-531"/>
</dbReference>
<dbReference type="PDB" id="6WP3">
    <property type="method" value="X-ray"/>
    <property type="resolution" value="1.84 A"/>
    <property type="chains" value="A/B=1-531"/>
</dbReference>
<dbReference type="PDB" id="6WP4">
    <property type="method" value="X-ray"/>
    <property type="resolution" value="1.90 A"/>
    <property type="chains" value="A/B/C/D=1-531"/>
</dbReference>
<dbReference type="PDB" id="6WP5">
    <property type="method" value="X-ray"/>
    <property type="resolution" value="2.17 A"/>
    <property type="chains" value="A/B/C/D=1-531"/>
</dbReference>
<dbReference type="PDB" id="6WP6">
    <property type="method" value="X-ray"/>
    <property type="resolution" value="2.45 A"/>
    <property type="chains" value="A/C=1-531"/>
</dbReference>
<dbReference type="PDB" id="7L21">
    <property type="method" value="X-ray"/>
    <property type="resolution" value="2.29 A"/>
    <property type="chains" value="A/B/C/D=1-531"/>
</dbReference>
<dbReference type="PDB" id="8G2E">
    <property type="method" value="X-ray"/>
    <property type="resolution" value="1.84 A"/>
    <property type="chains" value="A=1-531"/>
</dbReference>
<dbReference type="PDB" id="8HGF">
    <property type="method" value="X-ray"/>
    <property type="resolution" value="3.10 A"/>
    <property type="chains" value="A/B/C/D=1-531"/>
</dbReference>
<dbReference type="PDB" id="8HMQ">
    <property type="method" value="X-ray"/>
    <property type="resolution" value="2.50 A"/>
    <property type="chains" value="A/B/C/D=1-531"/>
</dbReference>
<dbReference type="PDB" id="8HMR">
    <property type="method" value="X-ray"/>
    <property type="resolution" value="2.60 A"/>
    <property type="chains" value="A/B/C/D=1-531"/>
</dbReference>
<dbReference type="PDB" id="8HMS">
    <property type="method" value="X-ray"/>
    <property type="resolution" value="2.10 A"/>
    <property type="chains" value="A/B/C/D=1-531"/>
</dbReference>
<dbReference type="PDB" id="8HMU">
    <property type="method" value="X-ray"/>
    <property type="resolution" value="2.50 A"/>
    <property type="chains" value="A/B/C/D=1-531"/>
</dbReference>
<dbReference type="PDB" id="8X4R">
    <property type="method" value="X-ray"/>
    <property type="resolution" value="2.18 A"/>
    <property type="chains" value="A/B/C/D=1-531"/>
</dbReference>
<dbReference type="PDBsum" id="1T5A"/>
<dbReference type="PDBsum" id="1ZJH"/>
<dbReference type="PDBsum" id="3BJF"/>
<dbReference type="PDBsum" id="3BJT"/>
<dbReference type="PDBsum" id="3G2G"/>
<dbReference type="PDBsum" id="3GQY"/>
<dbReference type="PDBsum" id="3GR4"/>
<dbReference type="PDBsum" id="3H6O"/>
<dbReference type="PDBsum" id="3ME3"/>
<dbReference type="PDBsum" id="3SRD"/>
<dbReference type="PDBsum" id="3SRF"/>
<dbReference type="PDBsum" id="3SRH"/>
<dbReference type="PDBsum" id="3U2Z"/>
<dbReference type="PDBsum" id="4B2D"/>
<dbReference type="PDBsum" id="4FXF"/>
<dbReference type="PDBsum" id="4FXJ"/>
<dbReference type="PDBsum" id="4G1N"/>
<dbReference type="PDBsum" id="4JPG"/>
<dbReference type="PDBsum" id="4QG6"/>
<dbReference type="PDBsum" id="4QG8"/>
<dbReference type="PDBsum" id="4QG9"/>
<dbReference type="PDBsum" id="4QGC"/>
<dbReference type="PDBsum" id="4RPP"/>
<dbReference type="PDBsum" id="4WJ8"/>
<dbReference type="PDBsum" id="4YJ5"/>
<dbReference type="PDBsum" id="5X0I"/>
<dbReference type="PDBsum" id="5X1V"/>
<dbReference type="PDBsum" id="5X1W"/>
<dbReference type="PDBsum" id="6B6U"/>
<dbReference type="PDBsum" id="6GG3"/>
<dbReference type="PDBsum" id="6GG4"/>
<dbReference type="PDBsum" id="6GG5"/>
<dbReference type="PDBsum" id="6GG6"/>
<dbReference type="PDBsum" id="6JFB"/>
<dbReference type="PDBsum" id="6NU1"/>
<dbReference type="PDBsum" id="6NU5"/>
<dbReference type="PDBsum" id="6NUB"/>
<dbReference type="PDBsum" id="6TTF"/>
<dbReference type="PDBsum" id="6TTH"/>
<dbReference type="PDBsum" id="6TTI"/>
<dbReference type="PDBsum" id="6TTQ"/>
<dbReference type="PDBsum" id="6V74"/>
<dbReference type="PDBsum" id="6V75"/>
<dbReference type="PDBsum" id="6V76"/>
<dbReference type="PDBsum" id="6WP3"/>
<dbReference type="PDBsum" id="6WP4"/>
<dbReference type="PDBsum" id="6WP5"/>
<dbReference type="PDBsum" id="6WP6"/>
<dbReference type="PDBsum" id="7L21"/>
<dbReference type="PDBsum" id="8G2E"/>
<dbReference type="PDBsum" id="8HGF"/>
<dbReference type="PDBsum" id="8HMQ"/>
<dbReference type="PDBsum" id="8HMR"/>
<dbReference type="PDBsum" id="8HMS"/>
<dbReference type="PDBsum" id="8HMU"/>
<dbReference type="PDBsum" id="8X4R"/>
<dbReference type="EMDB" id="EMD-10575"/>
<dbReference type="EMDB" id="EMD-10576"/>
<dbReference type="EMDB" id="EMD-10577"/>
<dbReference type="EMDB" id="EMD-10584"/>
<dbReference type="SMR" id="P14618"/>
<dbReference type="BioGRID" id="111332">
    <property type="interactions" value="511"/>
</dbReference>
<dbReference type="ComplexPortal" id="CPX-3057">
    <molecule id="P14618-1"/>
    <property type="entry name" value="PKM2 pyruvate kinase complex (dimer)"/>
</dbReference>
<dbReference type="ComplexPortal" id="CPX-3058">
    <molecule id="P14618-1"/>
    <property type="entry name" value="PKM2 pyruvate kinase complex (tetramer)"/>
</dbReference>
<dbReference type="ComplexPortal" id="CPX-3093">
    <molecule id="P14618-2"/>
    <property type="entry name" value="PKM1 pyruvate kinase complex"/>
</dbReference>
<dbReference type="CORUM" id="P14618"/>
<dbReference type="DIP" id="DIP-31273N"/>
<dbReference type="FunCoup" id="P14618">
    <property type="interactions" value="1373"/>
</dbReference>
<dbReference type="IntAct" id="P14618">
    <property type="interactions" value="315"/>
</dbReference>
<dbReference type="MINT" id="P14618"/>
<dbReference type="STRING" id="9606.ENSP00000320171"/>
<dbReference type="BindingDB" id="P14618"/>
<dbReference type="ChEMBL" id="CHEMBL1075189"/>
<dbReference type="DrugBank" id="DB07697">
    <property type="generic name" value="1-(2,3-dihydro-1,4-benzodioxin-6-ylsulfonyl)-4-[(4-methoxyphenyl)sulfonyl]piperazine"/>
</dbReference>
<dbReference type="DrugBank" id="DB07692">
    <property type="generic name" value="1-[(2,6-difluorophenyl)sulfonyl]-4-(2,3-dihydro-1,4-benzodioxin-6-ylsulfonyl)piperazine"/>
</dbReference>
<dbReference type="DrugBank" id="DB02726">
    <property type="generic name" value="2-Phosphoglycolic Acid"/>
</dbReference>
<dbReference type="DrugBank" id="DB07628">
    <property type="generic name" value="6-(2-fluorobenzyl)-2,4-dimethyl-4,6-dihydro-5H-thieno[2',3':4,5]pyrrolo[2,3-d]pyridazin-5-one"/>
</dbReference>
<dbReference type="DrugBank" id="DB00787">
    <property type="generic name" value="Acyclovir"/>
</dbReference>
<dbReference type="DrugBank" id="DB11638">
    <property type="generic name" value="Artenimol"/>
</dbReference>
<dbReference type="DrugBank" id="DB09130">
    <property type="generic name" value="Copper"/>
</dbReference>
<dbReference type="DrugBank" id="DB08951">
    <property type="generic name" value="Indoprofen"/>
</dbReference>
<dbReference type="DrugBank" id="DB01733">
    <property type="generic name" value="L-Phospholactate"/>
</dbReference>
<dbReference type="DrugBank" id="DB11263">
    <property type="generic name" value="Polydatin"/>
</dbReference>
<dbReference type="DrugBank" id="DB00119">
    <property type="generic name" value="Pyruvic acid"/>
</dbReference>
<dbReference type="DrugBank" id="DB12088">
    <property type="generic name" value="TT-232"/>
</dbReference>
<dbReference type="DrugCentral" id="P14618"/>
<dbReference type="GuidetoPHARMACOLOGY" id="3006"/>
<dbReference type="MoonDB" id="P14618">
    <property type="type" value="Curated"/>
</dbReference>
<dbReference type="MoonProt" id="P14618"/>
<dbReference type="GlyCosmos" id="P14618">
    <property type="glycosylation" value="3 sites, 1 glycan"/>
</dbReference>
<dbReference type="GlyGen" id="P14618">
    <property type="glycosylation" value="6 sites, 1 O-linked glycan (5 sites)"/>
</dbReference>
<dbReference type="iPTMnet" id="P14618"/>
<dbReference type="MetOSite" id="P14618"/>
<dbReference type="PhosphoSitePlus" id="P14618"/>
<dbReference type="SwissPalm" id="P14618"/>
<dbReference type="BioMuta" id="PKM"/>
<dbReference type="DMDM" id="20178296"/>
<dbReference type="OGP" id="P14618"/>
<dbReference type="REPRODUCTION-2DPAGE" id="IPI00220644"/>
<dbReference type="REPRODUCTION-2DPAGE" id="IPI00479186"/>
<dbReference type="CPTAC" id="CPTAC-2745"/>
<dbReference type="jPOST" id="P14618"/>
<dbReference type="MassIVE" id="P14618"/>
<dbReference type="PaxDb" id="9606-ENSP00000320171"/>
<dbReference type="PeptideAtlas" id="P14618"/>
<dbReference type="PRIDE" id="P14618"/>
<dbReference type="ProteomicsDB" id="53065">
    <molecule id="P14618-3"/>
</dbReference>
<dbReference type="Pumba" id="P14618"/>
<dbReference type="TopDownProteomics" id="P14618-1">
    <molecule id="P14618-1"/>
</dbReference>
<dbReference type="TopDownProteomics" id="P14618-2">
    <molecule id="P14618-2"/>
</dbReference>
<dbReference type="Antibodypedia" id="14162">
    <property type="antibodies" value="1224 antibodies from 45 providers"/>
</dbReference>
<dbReference type="CPTC" id="P14618">
    <property type="antibodies" value="1 antibody"/>
</dbReference>
<dbReference type="DNASU" id="5315"/>
<dbReference type="Ensembl" id="ENST00000319622.10">
    <molecule id="P14618-2"/>
    <property type="protein sequence ID" value="ENSP00000320171.6"/>
    <property type="gene ID" value="ENSG00000067225.21"/>
</dbReference>
<dbReference type="Ensembl" id="ENST00000335181.10">
    <molecule id="P14618-1"/>
    <property type="protein sequence ID" value="ENSP00000334983.5"/>
    <property type="gene ID" value="ENSG00000067225.21"/>
</dbReference>
<dbReference type="Ensembl" id="ENST00000568459.5">
    <molecule id="P14618-2"/>
    <property type="protein sequence ID" value="ENSP00000456970.1"/>
    <property type="gene ID" value="ENSG00000067225.21"/>
</dbReference>
<dbReference type="GeneID" id="5315"/>
<dbReference type="KEGG" id="hsa:5315"/>
<dbReference type="MANE-Select" id="ENST00000335181.10">
    <property type="protein sequence ID" value="ENSP00000334983.5"/>
    <property type="RefSeq nucleotide sequence ID" value="NM_002654.6"/>
    <property type="RefSeq protein sequence ID" value="NP_002645.3"/>
</dbReference>
<dbReference type="UCSC" id="uc002atw.2">
    <molecule id="P14618-1"/>
    <property type="organism name" value="human"/>
</dbReference>
<dbReference type="AGR" id="HGNC:9021"/>
<dbReference type="CTD" id="5315"/>
<dbReference type="DisGeNET" id="5315"/>
<dbReference type="GeneCards" id="PKM"/>
<dbReference type="HGNC" id="HGNC:9021">
    <property type="gene designation" value="PKM"/>
</dbReference>
<dbReference type="HPA" id="ENSG00000067225">
    <property type="expression patterns" value="Tissue enhanced (skeletal muscle, tongue)"/>
</dbReference>
<dbReference type="MalaCards" id="PKM"/>
<dbReference type="MIM" id="179050">
    <property type="type" value="gene"/>
</dbReference>
<dbReference type="neXtProt" id="NX_P14618"/>
<dbReference type="OpenTargets" id="ENSG00000067225"/>
<dbReference type="PharmGKB" id="PA33353"/>
<dbReference type="VEuPathDB" id="HostDB:ENSG00000067225"/>
<dbReference type="eggNOG" id="KOG2323">
    <property type="taxonomic scope" value="Eukaryota"/>
</dbReference>
<dbReference type="GeneTree" id="ENSGT00390000008859"/>
<dbReference type="HOGENOM" id="CLU_015439_0_1_1"/>
<dbReference type="InParanoid" id="P14618"/>
<dbReference type="OMA" id="RVHHIGE"/>
<dbReference type="OrthoDB" id="108365at2759"/>
<dbReference type="PAN-GO" id="P14618">
    <property type="GO annotations" value="4 GO annotations based on evolutionary models"/>
</dbReference>
<dbReference type="PhylomeDB" id="P14618"/>
<dbReference type="TreeFam" id="TF300390"/>
<dbReference type="BioCyc" id="MetaCyc:HS00906-MONOMER"/>
<dbReference type="BRENDA" id="2.7.1.40">
    <property type="organism ID" value="2681"/>
</dbReference>
<dbReference type="PathwayCommons" id="P14618"/>
<dbReference type="Reactome" id="R-HSA-6798695">
    <property type="pathway name" value="Neutrophil degranulation"/>
</dbReference>
<dbReference type="Reactome" id="R-HSA-70171">
    <property type="pathway name" value="Glycolysis"/>
</dbReference>
<dbReference type="Reactome" id="R-HSA-70268">
    <property type="pathway name" value="Pyruvate metabolism"/>
</dbReference>
<dbReference type="Reactome" id="R-HSA-9861718">
    <molecule id="P14618-1"/>
    <property type="pathway name" value="Regulation of pyruvate metabolism"/>
</dbReference>
<dbReference type="SABIO-RK" id="P14618"/>
<dbReference type="SignaLink" id="P14618"/>
<dbReference type="SIGNOR" id="P14618"/>
<dbReference type="UniPathway" id="UPA00109">
    <property type="reaction ID" value="UER00188"/>
</dbReference>
<dbReference type="BioGRID-ORCS" id="5315">
    <property type="hits" value="628 hits in 1182 CRISPR screens"/>
</dbReference>
<dbReference type="CD-CODE" id="91857CE7">
    <property type="entry name" value="Nucleolus"/>
</dbReference>
<dbReference type="CD-CODE" id="FB4E32DD">
    <property type="entry name" value="Presynaptic clusters and postsynaptic densities"/>
</dbReference>
<dbReference type="ChiTaRS" id="PKM">
    <property type="organism name" value="human"/>
</dbReference>
<dbReference type="EvolutionaryTrace" id="P14618"/>
<dbReference type="GeneWiki" id="PKM2"/>
<dbReference type="GenomeRNAi" id="5315"/>
<dbReference type="Pharos" id="P14618">
    <property type="development level" value="Tchem"/>
</dbReference>
<dbReference type="PRO" id="PR:P14618"/>
<dbReference type="Proteomes" id="UP000005640">
    <property type="component" value="Chromosome 15"/>
</dbReference>
<dbReference type="RNAct" id="P14618">
    <property type="molecule type" value="protein"/>
</dbReference>
<dbReference type="Bgee" id="ENSG00000067225">
    <property type="expression patterns" value="Expressed in right hemisphere of cerebellum and 208 other cell types or tissues"/>
</dbReference>
<dbReference type="ExpressionAtlas" id="P14618">
    <property type="expression patterns" value="baseline and differential"/>
</dbReference>
<dbReference type="GO" id="GO:0005929">
    <property type="term" value="C:cilium"/>
    <property type="evidence" value="ECO:0007669"/>
    <property type="project" value="Ensembl"/>
</dbReference>
<dbReference type="GO" id="GO:0062023">
    <property type="term" value="C:collagen-containing extracellular matrix"/>
    <property type="evidence" value="ECO:0007005"/>
    <property type="project" value="UniProtKB"/>
</dbReference>
<dbReference type="GO" id="GO:0005737">
    <property type="term" value="C:cytoplasm"/>
    <property type="evidence" value="ECO:0000314"/>
    <property type="project" value="UniProtKB"/>
</dbReference>
<dbReference type="GO" id="GO:0005829">
    <property type="term" value="C:cytosol"/>
    <property type="evidence" value="ECO:0000314"/>
    <property type="project" value="HPA"/>
</dbReference>
<dbReference type="GO" id="GO:0070062">
    <property type="term" value="C:extracellular exosome"/>
    <property type="evidence" value="ECO:0007005"/>
    <property type="project" value="UniProtKB"/>
</dbReference>
<dbReference type="GO" id="GO:0005576">
    <property type="term" value="C:extracellular region"/>
    <property type="evidence" value="ECO:0000304"/>
    <property type="project" value="Reactome"/>
</dbReference>
<dbReference type="GO" id="GO:1903561">
    <property type="term" value="C:extracellular vesicle"/>
    <property type="evidence" value="ECO:0007005"/>
    <property type="project" value="UniProtKB"/>
</dbReference>
<dbReference type="GO" id="GO:1904813">
    <property type="term" value="C:ficolin-1-rich granule lumen"/>
    <property type="evidence" value="ECO:0000304"/>
    <property type="project" value="Reactome"/>
</dbReference>
<dbReference type="GO" id="GO:0043231">
    <property type="term" value="C:intracellular membrane-bounded organelle"/>
    <property type="evidence" value="ECO:0000314"/>
    <property type="project" value="HPA"/>
</dbReference>
<dbReference type="GO" id="GO:0005739">
    <property type="term" value="C:mitochondrion"/>
    <property type="evidence" value="ECO:0007005"/>
    <property type="project" value="UniProtKB"/>
</dbReference>
<dbReference type="GO" id="GO:0005634">
    <property type="term" value="C:nucleus"/>
    <property type="evidence" value="ECO:0000314"/>
    <property type="project" value="UniProtKB"/>
</dbReference>
<dbReference type="GO" id="GO:0005791">
    <property type="term" value="C:rough endoplasmic reticulum"/>
    <property type="evidence" value="ECO:0000250"/>
    <property type="project" value="UniProtKB"/>
</dbReference>
<dbReference type="GO" id="GO:0034774">
    <property type="term" value="C:secretory granule lumen"/>
    <property type="evidence" value="ECO:0000304"/>
    <property type="project" value="Reactome"/>
</dbReference>
<dbReference type="GO" id="GO:0031982">
    <property type="term" value="C:vesicle"/>
    <property type="evidence" value="ECO:0007005"/>
    <property type="project" value="UniProtKB"/>
</dbReference>
<dbReference type="GO" id="GO:0005524">
    <property type="term" value="F:ATP binding"/>
    <property type="evidence" value="ECO:0007669"/>
    <property type="project" value="UniProtKB-KW"/>
</dbReference>
<dbReference type="GO" id="GO:0045296">
    <property type="term" value="F:cadherin binding"/>
    <property type="evidence" value="ECO:0007005"/>
    <property type="project" value="BHF-UCL"/>
</dbReference>
<dbReference type="GO" id="GO:0035402">
    <property type="term" value="F:histone H3T11 kinase activity"/>
    <property type="evidence" value="ECO:0000314"/>
    <property type="project" value="UniProtKB"/>
</dbReference>
<dbReference type="GO" id="GO:0000287">
    <property type="term" value="F:magnesium ion binding"/>
    <property type="evidence" value="ECO:0007669"/>
    <property type="project" value="InterPro"/>
</dbReference>
<dbReference type="GO" id="GO:0023026">
    <property type="term" value="F:MHC class II protein complex binding"/>
    <property type="evidence" value="ECO:0007005"/>
    <property type="project" value="UniProtKB"/>
</dbReference>
<dbReference type="GO" id="GO:0003729">
    <property type="term" value="F:mRNA binding"/>
    <property type="evidence" value="ECO:0000250"/>
    <property type="project" value="UniProtKB"/>
</dbReference>
<dbReference type="GO" id="GO:0030955">
    <property type="term" value="F:potassium ion binding"/>
    <property type="evidence" value="ECO:0007669"/>
    <property type="project" value="InterPro"/>
</dbReference>
<dbReference type="GO" id="GO:0042803">
    <property type="term" value="F:protein homodimerization activity"/>
    <property type="evidence" value="ECO:0000314"/>
    <property type="project" value="UniProtKB"/>
</dbReference>
<dbReference type="GO" id="GO:0004713">
    <property type="term" value="F:protein tyrosine kinase activity"/>
    <property type="evidence" value="ECO:0000314"/>
    <property type="project" value="UniProtKB"/>
</dbReference>
<dbReference type="GO" id="GO:0004743">
    <property type="term" value="F:pyruvate kinase activity"/>
    <property type="evidence" value="ECO:0000314"/>
    <property type="project" value="UniProtKB"/>
</dbReference>
<dbReference type="GO" id="GO:0003723">
    <property type="term" value="F:RNA binding"/>
    <property type="evidence" value="ECO:0007005"/>
    <property type="project" value="UniProtKB"/>
</dbReference>
<dbReference type="GO" id="GO:0003713">
    <property type="term" value="F:transcription coactivator activity"/>
    <property type="evidence" value="ECO:0000314"/>
    <property type="project" value="UniProtKB"/>
</dbReference>
<dbReference type="GO" id="GO:0061621">
    <property type="term" value="P:canonical glycolysis"/>
    <property type="evidence" value="ECO:0007669"/>
    <property type="project" value="Ensembl"/>
</dbReference>
<dbReference type="GO" id="GO:0032869">
    <property type="term" value="P:cellular response to insulin stimulus"/>
    <property type="evidence" value="ECO:0000318"/>
    <property type="project" value="GO_Central"/>
</dbReference>
<dbReference type="GO" id="GO:0006096">
    <property type="term" value="P:glycolytic process"/>
    <property type="evidence" value="ECO:0000314"/>
    <property type="project" value="UniProt"/>
</dbReference>
<dbReference type="GO" id="GO:2000767">
    <property type="term" value="P:positive regulation of cytoplasmic translation"/>
    <property type="evidence" value="ECO:0000250"/>
    <property type="project" value="UniProtKB"/>
</dbReference>
<dbReference type="GO" id="GO:1903672">
    <property type="term" value="P:positive regulation of sprouting angiogenesis"/>
    <property type="evidence" value="ECO:0000315"/>
    <property type="project" value="UniProtKB"/>
</dbReference>
<dbReference type="GO" id="GO:0045944">
    <property type="term" value="P:positive regulation of transcription by RNA polymerase II"/>
    <property type="evidence" value="ECO:0000314"/>
    <property type="project" value="UniProtKB"/>
</dbReference>
<dbReference type="GO" id="GO:0012501">
    <property type="term" value="P:programmed cell death"/>
    <property type="evidence" value="ECO:0000314"/>
    <property type="project" value="UniProtKB"/>
</dbReference>
<dbReference type="CDD" id="cd00288">
    <property type="entry name" value="Pyruvate_Kinase"/>
    <property type="match status" value="1"/>
</dbReference>
<dbReference type="FunFam" id="3.20.20.60:FF:000025">
    <property type="entry name" value="Pyruvate kinase"/>
    <property type="match status" value="1"/>
</dbReference>
<dbReference type="FunFam" id="3.40.1380.20:FF:000001">
    <property type="entry name" value="Pyruvate kinase"/>
    <property type="match status" value="1"/>
</dbReference>
<dbReference type="FunFam" id="3.40.1380.20:FF:000002">
    <property type="entry name" value="Pyruvate kinase"/>
    <property type="match status" value="1"/>
</dbReference>
<dbReference type="FunFam" id="2.40.33.10:FF:000023">
    <property type="entry name" value="Pyruvate kinase PKM"/>
    <property type="match status" value="1"/>
</dbReference>
<dbReference type="Gene3D" id="3.20.20.60">
    <property type="entry name" value="Phosphoenolpyruvate-binding domains"/>
    <property type="match status" value="1"/>
</dbReference>
<dbReference type="Gene3D" id="2.40.33.10">
    <property type="entry name" value="PK beta-barrel domain-like"/>
    <property type="match status" value="1"/>
</dbReference>
<dbReference type="Gene3D" id="3.40.1380.20">
    <property type="entry name" value="Pyruvate kinase, C-terminal domain"/>
    <property type="match status" value="2"/>
</dbReference>
<dbReference type="InterPro" id="IPR001697">
    <property type="entry name" value="Pyr_Knase"/>
</dbReference>
<dbReference type="InterPro" id="IPR015813">
    <property type="entry name" value="Pyrv/PenolPyrv_kinase-like_dom"/>
</dbReference>
<dbReference type="InterPro" id="IPR040442">
    <property type="entry name" value="Pyrv_kinase-like_dom_sf"/>
</dbReference>
<dbReference type="InterPro" id="IPR011037">
    <property type="entry name" value="Pyrv_Knase-like_insert_dom_sf"/>
</dbReference>
<dbReference type="InterPro" id="IPR018209">
    <property type="entry name" value="Pyrv_Knase_AS"/>
</dbReference>
<dbReference type="InterPro" id="IPR015793">
    <property type="entry name" value="Pyrv_Knase_brl"/>
</dbReference>
<dbReference type="InterPro" id="IPR015795">
    <property type="entry name" value="Pyrv_Knase_C"/>
</dbReference>
<dbReference type="InterPro" id="IPR036918">
    <property type="entry name" value="Pyrv_Knase_C_sf"/>
</dbReference>
<dbReference type="InterPro" id="IPR015806">
    <property type="entry name" value="Pyrv_Knase_insert_dom_sf"/>
</dbReference>
<dbReference type="NCBIfam" id="NF004491">
    <property type="entry name" value="PRK05826.1"/>
    <property type="match status" value="1"/>
</dbReference>
<dbReference type="NCBIfam" id="NF004978">
    <property type="entry name" value="PRK06354.1"/>
    <property type="match status" value="1"/>
</dbReference>
<dbReference type="NCBIfam" id="TIGR01064">
    <property type="entry name" value="pyruv_kin"/>
    <property type="match status" value="1"/>
</dbReference>
<dbReference type="PANTHER" id="PTHR11817">
    <property type="entry name" value="PYRUVATE KINASE"/>
    <property type="match status" value="1"/>
</dbReference>
<dbReference type="Pfam" id="PF00224">
    <property type="entry name" value="PK"/>
    <property type="match status" value="1"/>
</dbReference>
<dbReference type="Pfam" id="PF02887">
    <property type="entry name" value="PK_C"/>
    <property type="match status" value="1"/>
</dbReference>
<dbReference type="PRINTS" id="PR01050">
    <property type="entry name" value="PYRUVTKNASE"/>
</dbReference>
<dbReference type="SUPFAM" id="SSF51621">
    <property type="entry name" value="Phosphoenolpyruvate/pyruvate domain"/>
    <property type="match status" value="1"/>
</dbReference>
<dbReference type="SUPFAM" id="SSF50800">
    <property type="entry name" value="PK beta-barrel domain-like"/>
    <property type="match status" value="1"/>
</dbReference>
<dbReference type="SUPFAM" id="SSF52935">
    <property type="entry name" value="PK C-terminal domain-like"/>
    <property type="match status" value="1"/>
</dbReference>
<dbReference type="PROSITE" id="PS00110">
    <property type="entry name" value="PYRUVATE_KINASE"/>
    <property type="match status" value="1"/>
</dbReference>
<feature type="initiator methionine" description="Removed" evidence="6 15 33 48 57">
    <location>
        <position position="1"/>
    </location>
</feature>
<feature type="chain" id="PRO_0000112088" description="Pyruvate kinase PKM">
    <location>
        <begin position="2"/>
        <end position="531"/>
    </location>
</feature>
<feature type="region of interest" description="Interaction with POU5F1" evidence="11">
    <location>
        <begin position="307"/>
        <end position="531"/>
    </location>
</feature>
<feature type="region of interest" description="Intersubunit contact">
    <location>
        <begin position="389"/>
        <end position="433"/>
    </location>
</feature>
<feature type="binding site" evidence="23">
    <location>
        <position position="70"/>
    </location>
    <ligand>
        <name>L-serine</name>
        <dbReference type="ChEBI" id="CHEBI:33384"/>
    </ligand>
</feature>
<feature type="binding site" evidence="3">
    <location>
        <position position="73"/>
    </location>
    <ligand>
        <name>substrate</name>
    </ligand>
</feature>
<feature type="binding site" evidence="24 41">
    <location>
        <begin position="75"/>
        <end position="78"/>
    </location>
    <ligand>
        <name>ATP</name>
        <dbReference type="ChEBI" id="CHEBI:30616"/>
    </ligand>
</feature>
<feature type="binding site" evidence="24 41">
    <location>
        <position position="75"/>
    </location>
    <ligand>
        <name>K(+)</name>
        <dbReference type="ChEBI" id="CHEBI:29103"/>
    </ligand>
</feature>
<feature type="binding site" evidence="24 41">
    <location>
        <position position="77"/>
    </location>
    <ligand>
        <name>K(+)</name>
        <dbReference type="ChEBI" id="CHEBI:29103"/>
    </ligand>
</feature>
<feature type="binding site" evidence="23">
    <location>
        <position position="106"/>
    </location>
    <ligand>
        <name>L-serine</name>
        <dbReference type="ChEBI" id="CHEBI:33384"/>
    </ligand>
</feature>
<feature type="binding site" evidence="24 41">
    <location>
        <position position="113"/>
    </location>
    <ligand>
        <name>K(+)</name>
        <dbReference type="ChEBI" id="CHEBI:29103"/>
    </ligand>
</feature>
<feature type="binding site" evidence="24 41">
    <location>
        <position position="114"/>
    </location>
    <ligand>
        <name>K(+)</name>
        <dbReference type="ChEBI" id="CHEBI:29103"/>
    </ligand>
</feature>
<feature type="binding site" evidence="24 41">
    <location>
        <position position="120"/>
    </location>
    <ligand>
        <name>ATP</name>
        <dbReference type="ChEBI" id="CHEBI:30616"/>
    </ligand>
</feature>
<feature type="binding site" evidence="24 41">
    <location>
        <position position="207"/>
    </location>
    <ligand>
        <name>ATP</name>
        <dbReference type="ChEBI" id="CHEBI:30616"/>
    </ligand>
</feature>
<feature type="binding site" evidence="3">
    <location>
        <position position="270"/>
    </location>
    <ligand>
        <name>substrate</name>
    </ligand>
</feature>
<feature type="binding site" evidence="24 41">
    <location>
        <position position="272"/>
    </location>
    <ligand>
        <name>Mg(2+)</name>
        <dbReference type="ChEBI" id="CHEBI:18420"/>
    </ligand>
</feature>
<feature type="binding site" evidence="3">
    <location>
        <position position="295"/>
    </location>
    <ligand>
        <name>substrate</name>
    </ligand>
</feature>
<feature type="binding site" evidence="24 41">
    <location>
        <position position="296"/>
    </location>
    <ligand>
        <name>Mg(2+)</name>
        <dbReference type="ChEBI" id="CHEBI:18420"/>
    </ligand>
</feature>
<feature type="binding site" evidence="3">
    <location>
        <position position="296"/>
    </location>
    <ligand>
        <name>substrate</name>
    </ligand>
</feature>
<feature type="binding site" evidence="3">
    <location>
        <position position="328"/>
    </location>
    <ligand>
        <name>substrate</name>
    </ligand>
</feature>
<feature type="binding site" evidence="8 24 40 41">
    <location>
        <begin position="432"/>
        <end position="437"/>
    </location>
    <ligand>
        <name>beta-D-fructose 1,6-bisphosphate</name>
        <dbReference type="ChEBI" id="CHEBI:32966"/>
        <note>allosteric activator</note>
    </ligand>
</feature>
<feature type="binding site" evidence="23">
    <location>
        <position position="464"/>
    </location>
    <ligand>
        <name>L-serine</name>
        <dbReference type="ChEBI" id="CHEBI:33384"/>
    </ligand>
</feature>
<feature type="binding site" evidence="8 24 40 41">
    <location>
        <position position="482"/>
    </location>
    <ligand>
        <name>beta-D-fructose 1,6-bisphosphate</name>
        <dbReference type="ChEBI" id="CHEBI:32966"/>
        <note>allosteric activator</note>
    </ligand>
</feature>
<feature type="binding site" evidence="8 24 40 41">
    <location>
        <position position="489"/>
    </location>
    <ligand>
        <name>beta-D-fructose 1,6-bisphosphate</name>
        <dbReference type="ChEBI" id="CHEBI:32966"/>
        <note>allosteric activator</note>
    </ligand>
</feature>
<feature type="binding site" evidence="8 24 40 41">
    <location>
        <begin position="516"/>
        <end position="521"/>
    </location>
    <ligand>
        <name>beta-D-fructose 1,6-bisphosphate</name>
        <dbReference type="ChEBI" id="CHEBI:32966"/>
        <note>allosteric activator</note>
    </ligand>
</feature>
<feature type="site" description="Transition state stabilizer" evidence="1">
    <location>
        <position position="270"/>
    </location>
</feature>
<feature type="site" description="Crucial for phosphotyrosine binding" evidence="28">
    <location>
        <position position="433"/>
    </location>
</feature>
<feature type="modified residue" description="N-acetylserine" evidence="33 48 57">
    <location>
        <position position="2"/>
    </location>
</feature>
<feature type="modified residue" description="N6,N6,N6-trimethyllysine" evidence="54">
    <location>
        <position position="3"/>
    </location>
</feature>
<feature type="modified residue" description="Phosphoserine" evidence="43 44 45 46 47 50 51 52 53 55">
    <location>
        <position position="37"/>
    </location>
</feature>
<feature type="modified residue" description="Phosphothreonine" evidence="53">
    <location>
        <position position="41"/>
    </location>
</feature>
<feature type="modified residue" description="N6-acetyllysine" evidence="49">
    <location>
        <position position="62"/>
    </location>
</feature>
<feature type="modified residue" description="N6-succinyllysine" evidence="4">
    <location>
        <position position="66"/>
    </location>
</feature>
<feature type="modified residue" description="N6-acetyllysine" evidence="49">
    <location>
        <position position="89"/>
    </location>
</feature>
<feature type="modified residue" description="Phosphoserine" evidence="2">
    <location>
        <position position="97"/>
    </location>
</feature>
<feature type="modified residue" description="Phosphoserine" evidence="2">
    <location>
        <position position="100"/>
    </location>
</feature>
<feature type="modified residue" description="Phosphotyrosine" evidence="42 53">
    <location>
        <position position="105"/>
    </location>
</feature>
<feature type="modified residue" description="Phosphoserine" evidence="53">
    <location>
        <position position="127"/>
    </location>
</feature>
<feature type="modified residue" description="Phosphotyrosine" evidence="4">
    <location>
        <position position="148"/>
    </location>
</feature>
<feature type="modified residue" description="N6-acetyllysine; alternate" evidence="49">
    <location>
        <position position="166"/>
    </location>
</feature>
<feature type="modified residue" description="N6-succinyllysine; alternate" evidence="4">
    <location>
        <position position="166"/>
    </location>
</feature>
<feature type="modified residue" description="Phosphotyrosine" evidence="50">
    <location>
        <position position="175"/>
    </location>
</feature>
<feature type="modified residue" description="Phosphothreonine" evidence="50">
    <location>
        <position position="195"/>
    </location>
</feature>
<feature type="modified residue" description="N6-acetyllysine; alternate" evidence="49">
    <location>
        <position position="266"/>
    </location>
</feature>
<feature type="modified residue" description="N6-acetyllysine; alternate" evidence="4">
    <location>
        <position position="270"/>
    </location>
</feature>
<feature type="modified residue" description="N6-acetyllysine" evidence="19">
    <location>
        <position position="305"/>
    </location>
</feature>
<feature type="modified residue" description="N6-acetyllysine; alternate" evidence="4">
    <location>
        <position position="322"/>
    </location>
</feature>
<feature type="modified residue" description="N6-succinyllysine; alternate" evidence="4">
    <location>
        <position position="322"/>
    </location>
</feature>
<feature type="modified residue" description="4-hydroxyproline" evidence="18">
    <location>
        <position position="403"/>
    </location>
</feature>
<feature type="modified residue" description="4-hydroxyproline" evidence="18">
    <location>
        <position position="408"/>
    </location>
</feature>
<feature type="modified residue" description="S-nitrosocysteine" evidence="31">
    <location>
        <position position="423"/>
    </location>
</feature>
<feature type="modified residue" description="S-nitrosocysteine" evidence="31">
    <location>
        <position position="424"/>
    </location>
</feature>
<feature type="modified residue" description="N6-acetyllysine" evidence="25 27 49">
    <location>
        <position position="433"/>
    </location>
</feature>
<feature type="modified residue" description="N6-acetyllysine" evidence="4">
    <location>
        <position position="475"/>
    </location>
</feature>
<feature type="modified residue" description="N6-succinyllysine" evidence="4">
    <location>
        <position position="498"/>
    </location>
</feature>
<feature type="cross-link" description="Glycyl lysine isopeptide (Lys-Gly) (interchain with G-Cter in SUMO2)" evidence="58">
    <location>
        <position position="115"/>
    </location>
</feature>
<feature type="cross-link" description="Glycyl lysine isopeptide (Lys-Gly) (interchain with G-Cter in SUMO1); alternate" evidence="56">
    <location>
        <position position="166"/>
    </location>
</feature>
<feature type="cross-link" description="Glycyl lysine isopeptide (Lys-Gly) (interchain with G-Cter in SUMO2); alternate" evidence="58">
    <location>
        <position position="266"/>
    </location>
</feature>
<feature type="cross-link" description="Glycyl lysine isopeptide (Lys-Gly) (interchain with G-Cter in SUMO2); alternate" evidence="58">
    <location>
        <position position="270"/>
    </location>
</feature>
<feature type="splice variant" id="VSP_043370" description="In isoform 3." evidence="34">
    <original>MSKPHSEAGTAFIQTQQLHAAMADTFLEHMCRLDIDSPPITARNTGIICTIGPASRSVETLKEMIKSGMNVARLNFSHGTHE</original>
    <variation>MSPEAQPQRTKGPQQPCRSPIVKPGLPSFRPSSCTQPWLTHSWSTCAAWTLIHHPSQPGTLASSVPL</variation>
    <location>
        <begin position="1"/>
        <end position="82"/>
    </location>
</feature>
<feature type="splice variant" id="VSP_011101" description="In isoform M1." evidence="34">
    <original>IYHLQLFEELRRLAPITSDPTEATAVGAVEASFKCCSGAIIVLTK</original>
    <variation>MFHRKLFEELVRASSHSTDLMEAMAMGSVEASYKCLAAALIVLTE</variation>
    <location>
        <begin position="389"/>
        <end position="433"/>
    </location>
</feature>
<feature type="sequence variant" id="VAR_033067" description="In dbSNP:rs17853396." evidence="7">
    <original>G</original>
    <variation>V</variation>
    <location>
        <position position="204"/>
    </location>
</feature>
<feature type="mutagenesis site" description="Abolishes both pyruvate kinase and protein kinase activities." evidence="20 22">
    <original>K</original>
    <variation>M</variation>
    <location>
        <position position="367"/>
    </location>
</feature>
<feature type="mutagenesis site" description="Impaired homotetramerization, leading to homodimerization and subsequent activation of the protein kinase activity." evidence="21">
    <original>R</original>
    <variation>E</variation>
    <location>
        <position position="399"/>
    </location>
</feature>
<feature type="mutagenesis site" description="Significant reduction in hydroxylation and in PKM-mediated transcriptional activity of HIF1A; when associated with A-408." evidence="18">
    <original>P</original>
    <variation>A</variation>
    <location>
        <position position="403"/>
    </location>
</feature>
<feature type="mutagenesis site" description="Significant reduction in hydroxylation and in PKM-mediated transcriptional activity of HIF1A; when associated with A-403." evidence="18">
    <original>P</original>
    <variation>A</variation>
    <location>
        <position position="408"/>
    </location>
</feature>
<feature type="mutagenesis site" description="Abolished S-nitrosylation, leading to increased pyruvate kinase activity." evidence="31">
    <original>CC</original>
    <variation>AA</variation>
    <location>
        <begin position="423"/>
        <end position="424"/>
    </location>
</feature>
<feature type="mutagenesis site" description="Abolished interaction with phosphorylated CTNNB1. Impaired phosphorylation of histone H3." evidence="20 22">
    <original>K</original>
    <variation>E</variation>
    <location>
        <position position="433"/>
    </location>
</feature>
<feature type="mutagenesis site" description="Mimics acetylation, promoting homodimerization and activation of the protein kinase activity." evidence="25 27">
    <original>K</original>
    <variation>Q</variation>
    <location>
        <position position="433"/>
    </location>
</feature>
<feature type="mutagenesis site" description="Abolished acetylation by EP300. Abolished deacetylation by SIRT6." evidence="25 27">
    <original>K</original>
    <variation>R</variation>
    <location>
        <position position="433"/>
    </location>
</feature>
<feature type="mutagenesis site" description="Unable to bind FBP but still activated by serine." evidence="23">
    <original>S</original>
    <variation>Y</variation>
    <location>
        <position position="437"/>
    </location>
</feature>
<feature type="mutagenesis site" description="Abolishes serine binding and allosteric activation." evidence="23">
    <original>H</original>
    <variation>A</variation>
    <location>
        <position position="464"/>
    </location>
</feature>
<feature type="sequence conflict" description="In Ref. 10; AAH12811." evidence="38" ref="10">
    <original>E</original>
    <variation>Q</variation>
    <location>
        <position position="7"/>
    </location>
</feature>
<feature type="sequence conflict" description="In Ref. 5; BAG52542." evidence="38" ref="5">
    <original>A</original>
    <variation>T</variation>
    <location>
        <position position="54"/>
    </location>
</feature>
<feature type="sequence conflict" description="In Ref. 2; AAA36672." evidence="38" ref="2">
    <original>I</original>
    <variation>Y</variation>
    <location>
        <position position="103"/>
    </location>
</feature>
<feature type="sequence conflict" description="In Ref. 2; AAA36672." evidence="38" ref="2">
    <original>V</original>
    <variation>L</variation>
    <location>
        <position position="132"/>
    </location>
</feature>
<feature type="sequence conflict" description="In Ref. 6; BAD96647." evidence="38" ref="6">
    <original>Q</original>
    <variation>R</variation>
    <location>
        <position position="187"/>
    </location>
</feature>
<feature type="sequence conflict" description="In Ref. 6; BAD96647." evidence="38" ref="6">
    <original>H</original>
    <variation>R</variation>
    <location>
        <position position="252"/>
    </location>
</feature>
<feature type="sequence conflict" description="In Ref. 4; CAA39849." evidence="38" ref="4">
    <original>R</original>
    <variation>P</variation>
    <location>
        <position position="339"/>
    </location>
</feature>
<feature type="sequence conflict" description="In Ref. 5; BAG52542." evidence="38" ref="5">
    <original>A</original>
    <variation>V</variation>
    <location>
        <position position="349"/>
    </location>
</feature>
<feature type="sequence conflict" description="In Ref. 1; AAA36449." evidence="38" ref="1">
    <original>H</original>
    <variation>N</variation>
    <location>
        <position position="379"/>
    </location>
</feature>
<feature type="sequence conflict" description="In Ref. 10; AAH12811." evidence="38" ref="10">
    <original>D</original>
    <variation>H</variation>
    <location>
        <position position="507"/>
    </location>
</feature>
<feature type="helix" evidence="66">
    <location>
        <begin position="9"/>
        <end position="11"/>
    </location>
</feature>
<feature type="turn" evidence="69">
    <location>
        <begin position="15"/>
        <end position="17"/>
    </location>
</feature>
<feature type="helix" evidence="66">
    <location>
        <begin position="18"/>
        <end position="21"/>
    </location>
</feature>
<feature type="strand" evidence="70">
    <location>
        <begin position="23"/>
        <end position="25"/>
    </location>
</feature>
<feature type="helix" evidence="66">
    <location>
        <begin position="26"/>
        <end position="31"/>
    </location>
</feature>
<feature type="strand" evidence="63">
    <location>
        <begin position="35"/>
        <end position="37"/>
    </location>
</feature>
<feature type="strand" evidence="66">
    <location>
        <begin position="45"/>
        <end position="50"/>
    </location>
</feature>
<feature type="turn" evidence="66">
    <location>
        <begin position="53"/>
        <end position="55"/>
    </location>
</feature>
<feature type="helix" evidence="66">
    <location>
        <begin position="58"/>
        <end position="67"/>
    </location>
</feature>
<feature type="strand" evidence="66">
    <location>
        <begin position="71"/>
        <end position="75"/>
    </location>
</feature>
<feature type="turn" evidence="67">
    <location>
        <begin position="76"/>
        <end position="78"/>
    </location>
</feature>
<feature type="helix" evidence="66">
    <location>
        <begin position="81"/>
        <end position="96"/>
    </location>
</feature>
<feature type="turn" evidence="66">
    <location>
        <begin position="97"/>
        <end position="100"/>
    </location>
</feature>
<feature type="turn" evidence="66">
    <location>
        <begin position="102"/>
        <end position="104"/>
    </location>
</feature>
<feature type="strand" evidence="66">
    <location>
        <begin position="109"/>
        <end position="113"/>
    </location>
</feature>
<feature type="strand" evidence="66">
    <location>
        <begin position="119"/>
        <end position="121"/>
    </location>
</feature>
<feature type="turn" evidence="66">
    <location>
        <begin position="125"/>
        <end position="127"/>
    </location>
</feature>
<feature type="strand" evidence="64">
    <location>
        <begin position="128"/>
        <end position="130"/>
    </location>
</feature>
<feature type="strand" evidence="66">
    <location>
        <begin position="132"/>
        <end position="134"/>
    </location>
</feature>
<feature type="strand" evidence="66">
    <location>
        <begin position="139"/>
        <end position="143"/>
    </location>
</feature>
<feature type="helix" evidence="66">
    <location>
        <begin position="146"/>
        <end position="148"/>
    </location>
</feature>
<feature type="strand" evidence="66">
    <location>
        <begin position="154"/>
        <end position="160"/>
    </location>
</feature>
<feature type="helix" evidence="66">
    <location>
        <begin position="164"/>
        <end position="167"/>
    </location>
</feature>
<feature type="strand" evidence="66">
    <location>
        <begin position="173"/>
        <end position="176"/>
    </location>
</feature>
<feature type="turn" evidence="66">
    <location>
        <begin position="177"/>
        <end position="180"/>
    </location>
</feature>
<feature type="strand" evidence="66">
    <location>
        <begin position="181"/>
        <end position="188"/>
    </location>
</feature>
<feature type="strand" evidence="66">
    <location>
        <begin position="190"/>
        <end position="199"/>
    </location>
</feature>
<feature type="strand" evidence="66">
    <location>
        <begin position="201"/>
        <end position="203"/>
    </location>
</feature>
<feature type="strand" evidence="62">
    <location>
        <begin position="204"/>
        <end position="206"/>
    </location>
</feature>
<feature type="strand" evidence="66">
    <location>
        <begin position="208"/>
        <end position="210"/>
    </location>
</feature>
<feature type="strand" evidence="65">
    <location>
        <begin position="212"/>
        <end position="214"/>
    </location>
</feature>
<feature type="helix" evidence="66">
    <location>
        <begin position="223"/>
        <end position="234"/>
    </location>
</feature>
<feature type="strand" evidence="66">
    <location>
        <begin position="238"/>
        <end position="242"/>
    </location>
</feature>
<feature type="helix" evidence="66">
    <location>
        <begin position="248"/>
        <end position="257"/>
    </location>
</feature>
<feature type="turn" evidence="66">
    <location>
        <begin position="258"/>
        <end position="264"/>
    </location>
</feature>
<feature type="strand" evidence="66">
    <location>
        <begin position="265"/>
        <end position="271"/>
    </location>
</feature>
<feature type="helix" evidence="66">
    <location>
        <begin position="274"/>
        <end position="278"/>
    </location>
</feature>
<feature type="helix" evidence="66">
    <location>
        <begin position="280"/>
        <end position="286"/>
    </location>
</feature>
<feature type="strand" evidence="66">
    <location>
        <begin position="287"/>
        <end position="293"/>
    </location>
</feature>
<feature type="helix" evidence="66">
    <location>
        <begin position="294"/>
        <end position="300"/>
    </location>
</feature>
<feature type="helix" evidence="66">
    <location>
        <begin position="303"/>
        <end position="305"/>
    </location>
</feature>
<feature type="helix" evidence="66">
    <location>
        <begin position="306"/>
        <end position="320"/>
    </location>
</feature>
<feature type="strand" evidence="66">
    <location>
        <begin position="324"/>
        <end position="329"/>
    </location>
</feature>
<feature type="helix" evidence="66">
    <location>
        <begin position="332"/>
        <end position="335"/>
    </location>
</feature>
<feature type="strand" evidence="68">
    <location>
        <begin position="337"/>
        <end position="339"/>
    </location>
</feature>
<feature type="helix" evidence="66">
    <location>
        <begin position="342"/>
        <end position="354"/>
    </location>
</feature>
<feature type="strand" evidence="66">
    <location>
        <begin position="357"/>
        <end position="362"/>
    </location>
</feature>
<feature type="helix" evidence="66">
    <location>
        <begin position="363"/>
        <end position="366"/>
    </location>
</feature>
<feature type="strand" evidence="59">
    <location>
        <begin position="367"/>
        <end position="369"/>
    </location>
</feature>
<feature type="helix" evidence="66">
    <location>
        <begin position="371"/>
        <end position="388"/>
    </location>
</feature>
<feature type="helix" evidence="66">
    <location>
        <begin position="391"/>
        <end position="400"/>
    </location>
</feature>
<feature type="turn" evidence="61">
    <location>
        <begin position="402"/>
        <end position="404"/>
    </location>
</feature>
<feature type="helix" evidence="66">
    <location>
        <begin position="408"/>
        <end position="423"/>
    </location>
</feature>
<feature type="strand" evidence="66">
    <location>
        <begin position="428"/>
        <end position="431"/>
    </location>
</feature>
<feature type="strand" evidence="66">
    <location>
        <begin position="433"/>
        <end position="435"/>
    </location>
</feature>
<feature type="helix" evidence="66">
    <location>
        <begin position="436"/>
        <end position="442"/>
    </location>
</feature>
<feature type="strand" evidence="66">
    <location>
        <begin position="450"/>
        <end position="455"/>
    </location>
</feature>
<feature type="helix" evidence="66">
    <location>
        <begin position="457"/>
        <end position="462"/>
    </location>
</feature>
<feature type="helix" evidence="66">
    <location>
        <begin position="463"/>
        <end position="465"/>
    </location>
</feature>
<feature type="strand" evidence="66">
    <location>
        <begin position="469"/>
        <end position="473"/>
    </location>
</feature>
<feature type="helix" evidence="66">
    <location>
        <begin position="482"/>
        <end position="499"/>
    </location>
</feature>
<feature type="strand" evidence="66">
    <location>
        <begin position="508"/>
        <end position="512"/>
    </location>
</feature>
<feature type="turn" evidence="60">
    <location>
        <begin position="517"/>
        <end position="519"/>
    </location>
</feature>
<feature type="strand" evidence="66">
    <location>
        <begin position="525"/>
        <end position="529"/>
    </location>
</feature>
<accession>P14618</accession>
<accession>A6NFK3</accession>
<accession>B2R5N8</accession>
<accession>B3KRY0</accession>
<accession>B4DFX8</accession>
<accession>B4DUU6</accession>
<accession>P14786</accession>
<accession>Q53GK4</accession>
<accession>Q96E76</accession>
<accession>Q9BWB5</accession>
<accession>Q9UCV6</accession>
<accession>Q9UPF2</accession>
<reference key="1">
    <citation type="journal article" date="1988" name="Gene">
        <title>Human M2-type pyruvate kinase: cDNA cloning, chromosomal assignment and expression in hepatoma.</title>
        <authorList>
            <person name="Tani K."/>
            <person name="Yoshida M.C."/>
            <person name="Satoh H."/>
            <person name="Mitamura K."/>
            <person name="Noguchi T."/>
            <person name="Tanaka T."/>
            <person name="Fujii H."/>
            <person name="Miwa S."/>
        </authorList>
    </citation>
    <scope>NUCLEOTIDE SEQUENCE [MRNA] (ISOFORM M2)</scope>
    <source>
        <tissue>Liver</tissue>
    </source>
</reference>
<reference key="2">
    <citation type="journal article" date="1989" name="Proc. Natl. Acad. Sci. U.S.A.">
        <title>Cytosolic thyroid hormone-binding protein is a monomer of pyruvate kinase.</title>
        <authorList>
            <person name="Kato H."/>
            <person name="Fukuda T."/>
            <person name="Parkison C."/>
            <person name="McPhie P."/>
            <person name="Cheng S.-Y."/>
        </authorList>
    </citation>
    <scope>NUCLEOTIDE SEQUENCE [MRNA] (ISOFORM M2)</scope>
    <scope>PROTEIN SEQUENCE OF 70-98</scope>
    <scope>SUBUNIT</scope>
    <scope>ACTIVITY REGULATION</scope>
</reference>
<reference key="3">
    <citation type="journal article" date="1990" name="Proc. Natl. Acad. Sci. U.S.A.">
        <authorList>
            <person name="Kato H."/>
            <person name="Fukuda T."/>
            <person name="Parkison C."/>
            <person name="McPhie P."/>
            <person name="Cheng S.-Y."/>
        </authorList>
    </citation>
    <scope>ERRATUM OF PUBMED:2813362</scope>
</reference>
<reference key="4">
    <citation type="journal article" date="1991" name="Eur. J. Biochem.">
        <title>Isolation and characterization of the human pyruvate kinase M gene.</title>
        <authorList>
            <person name="Takenaka M."/>
            <person name="Noguchi T."/>
            <person name="Sadahiro S."/>
            <person name="Hirai H."/>
            <person name="Yamada K."/>
            <person name="Matsuda T."/>
            <person name="Imai E."/>
            <person name="Tanaka T."/>
        </authorList>
    </citation>
    <scope>NUCLEOTIDE SEQUENCE [GENOMIC DNA]</scope>
    <scope>ALTERNATIVE SPLICING</scope>
</reference>
<reference key="5">
    <citation type="journal article" date="2004" name="Nat. Genet.">
        <title>Complete sequencing and characterization of 21,243 full-length human cDNAs.</title>
        <authorList>
            <person name="Ota T."/>
            <person name="Suzuki Y."/>
            <person name="Nishikawa T."/>
            <person name="Otsuki T."/>
            <person name="Sugiyama T."/>
            <person name="Irie R."/>
            <person name="Wakamatsu A."/>
            <person name="Hayashi K."/>
            <person name="Sato H."/>
            <person name="Nagai K."/>
            <person name="Kimura K."/>
            <person name="Makita H."/>
            <person name="Sekine M."/>
            <person name="Obayashi M."/>
            <person name="Nishi T."/>
            <person name="Shibahara T."/>
            <person name="Tanaka T."/>
            <person name="Ishii S."/>
            <person name="Yamamoto J."/>
            <person name="Saito K."/>
            <person name="Kawai Y."/>
            <person name="Isono Y."/>
            <person name="Nakamura Y."/>
            <person name="Nagahari K."/>
            <person name="Murakami K."/>
            <person name="Yasuda T."/>
            <person name="Iwayanagi T."/>
            <person name="Wagatsuma M."/>
            <person name="Shiratori A."/>
            <person name="Sudo H."/>
            <person name="Hosoiri T."/>
            <person name="Kaku Y."/>
            <person name="Kodaira H."/>
            <person name="Kondo H."/>
            <person name="Sugawara M."/>
            <person name="Takahashi M."/>
            <person name="Kanda K."/>
            <person name="Yokoi T."/>
            <person name="Furuya T."/>
            <person name="Kikkawa E."/>
            <person name="Omura Y."/>
            <person name="Abe K."/>
            <person name="Kamihara K."/>
            <person name="Katsuta N."/>
            <person name="Sato K."/>
            <person name="Tanikawa M."/>
            <person name="Yamazaki M."/>
            <person name="Ninomiya K."/>
            <person name="Ishibashi T."/>
            <person name="Yamashita H."/>
            <person name="Murakawa K."/>
            <person name="Fujimori K."/>
            <person name="Tanai H."/>
            <person name="Kimata M."/>
            <person name="Watanabe M."/>
            <person name="Hiraoka S."/>
            <person name="Chiba Y."/>
            <person name="Ishida S."/>
            <person name="Ono Y."/>
            <person name="Takiguchi S."/>
            <person name="Watanabe S."/>
            <person name="Yosida M."/>
            <person name="Hotuta T."/>
            <person name="Kusano J."/>
            <person name="Kanehori K."/>
            <person name="Takahashi-Fujii A."/>
            <person name="Hara H."/>
            <person name="Tanase T.-O."/>
            <person name="Nomura Y."/>
            <person name="Togiya S."/>
            <person name="Komai F."/>
            <person name="Hara R."/>
            <person name="Takeuchi K."/>
            <person name="Arita M."/>
            <person name="Imose N."/>
            <person name="Musashino K."/>
            <person name="Yuuki H."/>
            <person name="Oshima A."/>
            <person name="Sasaki N."/>
            <person name="Aotsuka S."/>
            <person name="Yoshikawa Y."/>
            <person name="Matsunawa H."/>
            <person name="Ichihara T."/>
            <person name="Shiohata N."/>
            <person name="Sano S."/>
            <person name="Moriya S."/>
            <person name="Momiyama H."/>
            <person name="Satoh N."/>
            <person name="Takami S."/>
            <person name="Terashima Y."/>
            <person name="Suzuki O."/>
            <person name="Nakagawa S."/>
            <person name="Senoh A."/>
            <person name="Mizoguchi H."/>
            <person name="Goto Y."/>
            <person name="Shimizu F."/>
            <person name="Wakebe H."/>
            <person name="Hishigaki H."/>
            <person name="Watanabe T."/>
            <person name="Sugiyama A."/>
            <person name="Takemoto M."/>
            <person name="Kawakami B."/>
            <person name="Yamazaki M."/>
            <person name="Watanabe K."/>
            <person name="Kumagai A."/>
            <person name="Itakura S."/>
            <person name="Fukuzumi Y."/>
            <person name="Fujimori Y."/>
            <person name="Komiyama M."/>
            <person name="Tashiro H."/>
            <person name="Tanigami A."/>
            <person name="Fujiwara T."/>
            <person name="Ono T."/>
            <person name="Yamada K."/>
            <person name="Fujii Y."/>
            <person name="Ozaki K."/>
            <person name="Hirao M."/>
            <person name="Ohmori Y."/>
            <person name="Kawabata A."/>
            <person name="Hikiji T."/>
            <person name="Kobatake N."/>
            <person name="Inagaki H."/>
            <person name="Ikema Y."/>
            <person name="Okamoto S."/>
            <person name="Okitani R."/>
            <person name="Kawakami T."/>
            <person name="Noguchi S."/>
            <person name="Itoh T."/>
            <person name="Shigeta K."/>
            <person name="Senba T."/>
            <person name="Matsumura K."/>
            <person name="Nakajima Y."/>
            <person name="Mizuno T."/>
            <person name="Morinaga M."/>
            <person name="Sasaki M."/>
            <person name="Togashi T."/>
            <person name="Oyama M."/>
            <person name="Hata H."/>
            <person name="Watanabe M."/>
            <person name="Komatsu T."/>
            <person name="Mizushima-Sugano J."/>
            <person name="Satoh T."/>
            <person name="Shirai Y."/>
            <person name="Takahashi Y."/>
            <person name="Nakagawa K."/>
            <person name="Okumura K."/>
            <person name="Nagase T."/>
            <person name="Nomura N."/>
            <person name="Kikuchi H."/>
            <person name="Masuho Y."/>
            <person name="Yamashita R."/>
            <person name="Nakai K."/>
            <person name="Yada T."/>
            <person name="Nakamura Y."/>
            <person name="Ohara O."/>
            <person name="Isogai T."/>
            <person name="Sugano S."/>
        </authorList>
    </citation>
    <scope>NUCLEOTIDE SEQUENCE [LARGE SCALE MRNA] (ISOFORMS M1 AND 3)</scope>
    <source>
        <tissue>Astrocyte</tissue>
        <tissue>Fetal brain</tissue>
    </source>
</reference>
<reference key="6">
    <citation type="submission" date="2005-04" db="EMBL/GenBank/DDBJ databases">
        <authorList>
            <person name="Suzuki Y."/>
            <person name="Sugano S."/>
            <person name="Totoki Y."/>
            <person name="Toyoda A."/>
            <person name="Takeda T."/>
            <person name="Sakaki Y."/>
            <person name="Tanaka A."/>
            <person name="Yokoyama S."/>
        </authorList>
    </citation>
    <scope>NUCLEOTIDE SEQUENCE [LARGE SCALE MRNA] (ISOFORM M2)</scope>
    <source>
        <tissue>Kidney</tissue>
    </source>
</reference>
<reference key="7">
    <citation type="submission" date="2003-07" db="EMBL/GenBank/DDBJ databases">
        <authorList>
            <consortium name="NIEHS SNPs program"/>
        </authorList>
    </citation>
    <scope>NUCLEOTIDE SEQUENCE [GENOMIC DNA]</scope>
</reference>
<reference key="8">
    <citation type="journal article" date="2006" name="Nature">
        <title>Analysis of the DNA sequence and duplication history of human chromosome 15.</title>
        <authorList>
            <person name="Zody M.C."/>
            <person name="Garber M."/>
            <person name="Sharpe T."/>
            <person name="Young S.K."/>
            <person name="Rowen L."/>
            <person name="O'Neill K."/>
            <person name="Whittaker C.A."/>
            <person name="Kamal M."/>
            <person name="Chang J.L."/>
            <person name="Cuomo C.A."/>
            <person name="Dewar K."/>
            <person name="FitzGerald M.G."/>
            <person name="Kodira C.D."/>
            <person name="Madan A."/>
            <person name="Qin S."/>
            <person name="Yang X."/>
            <person name="Abbasi N."/>
            <person name="Abouelleil A."/>
            <person name="Arachchi H.M."/>
            <person name="Baradarani L."/>
            <person name="Birditt B."/>
            <person name="Bloom S."/>
            <person name="Bloom T."/>
            <person name="Borowsky M.L."/>
            <person name="Burke J."/>
            <person name="Butler J."/>
            <person name="Cook A."/>
            <person name="DeArellano K."/>
            <person name="DeCaprio D."/>
            <person name="Dorris L. III"/>
            <person name="Dors M."/>
            <person name="Eichler E.E."/>
            <person name="Engels R."/>
            <person name="Fahey J."/>
            <person name="Fleetwood P."/>
            <person name="Friedman C."/>
            <person name="Gearin G."/>
            <person name="Hall J.L."/>
            <person name="Hensley G."/>
            <person name="Johnson E."/>
            <person name="Jones C."/>
            <person name="Kamat A."/>
            <person name="Kaur A."/>
            <person name="Locke D.P."/>
            <person name="Madan A."/>
            <person name="Munson G."/>
            <person name="Jaffe D.B."/>
            <person name="Lui A."/>
            <person name="Macdonald P."/>
            <person name="Mauceli E."/>
            <person name="Naylor J.W."/>
            <person name="Nesbitt R."/>
            <person name="Nicol R."/>
            <person name="O'Leary S.B."/>
            <person name="Ratcliffe A."/>
            <person name="Rounsley S."/>
            <person name="She X."/>
            <person name="Sneddon K.M.B."/>
            <person name="Stewart S."/>
            <person name="Sougnez C."/>
            <person name="Stone S.M."/>
            <person name="Topham K."/>
            <person name="Vincent D."/>
            <person name="Wang S."/>
            <person name="Zimmer A.R."/>
            <person name="Birren B.W."/>
            <person name="Hood L."/>
            <person name="Lander E.S."/>
            <person name="Nusbaum C."/>
        </authorList>
    </citation>
    <scope>NUCLEOTIDE SEQUENCE [LARGE SCALE GENOMIC DNA]</scope>
</reference>
<reference key="9">
    <citation type="submission" date="2005-07" db="EMBL/GenBank/DDBJ databases">
        <authorList>
            <person name="Mural R.J."/>
            <person name="Istrail S."/>
            <person name="Sutton G.G."/>
            <person name="Florea L."/>
            <person name="Halpern A.L."/>
            <person name="Mobarry C.M."/>
            <person name="Lippert R."/>
            <person name="Walenz B."/>
            <person name="Shatkay H."/>
            <person name="Dew I."/>
            <person name="Miller J.R."/>
            <person name="Flanigan M.J."/>
            <person name="Edwards N.J."/>
            <person name="Bolanos R."/>
            <person name="Fasulo D."/>
            <person name="Halldorsson B.V."/>
            <person name="Hannenhalli S."/>
            <person name="Turner R."/>
            <person name="Yooseph S."/>
            <person name="Lu F."/>
            <person name="Nusskern D.R."/>
            <person name="Shue B.C."/>
            <person name="Zheng X.H."/>
            <person name="Zhong F."/>
            <person name="Delcher A.L."/>
            <person name="Huson D.H."/>
            <person name="Kravitz S.A."/>
            <person name="Mouchard L."/>
            <person name="Reinert K."/>
            <person name="Remington K.A."/>
            <person name="Clark A.G."/>
            <person name="Waterman M.S."/>
            <person name="Eichler E.E."/>
            <person name="Adams M.D."/>
            <person name="Hunkapiller M.W."/>
            <person name="Myers E.W."/>
            <person name="Venter J.C."/>
        </authorList>
    </citation>
    <scope>NUCLEOTIDE SEQUENCE [LARGE SCALE GENOMIC DNA]</scope>
</reference>
<reference key="10">
    <citation type="journal article" date="2004" name="Genome Res.">
        <title>The status, quality, and expansion of the NIH full-length cDNA project: the Mammalian Gene Collection (MGC).</title>
        <authorList>
            <consortium name="The MGC Project Team"/>
        </authorList>
    </citation>
    <scope>NUCLEOTIDE SEQUENCE [LARGE SCALE MRNA] (ISOFORM M2)</scope>
    <scope>VARIANT VAL-204</scope>
    <source>
        <tissue>Kidney</tissue>
        <tissue>Lung carcinoma</tissue>
        <tissue>Ovary</tissue>
        <tissue>Retina</tissue>
        <tissue>Rhabdomyosarcoma</tissue>
    </source>
</reference>
<reference key="11">
    <citation type="submission" date="2005-07" db="UniProtKB">
        <authorList>
            <person name="Bienvenut W.V."/>
        </authorList>
    </citation>
    <scope>PROTEIN SEQUENCE OF 2-43; 57-73; 93-115; 126-135; 167-186; 231-246; 271-311; 401-422; 448-455 AND 490-498</scope>
    <scope>CLEAVAGE OF INITIATOR METHIONINE</scope>
    <scope>ACETYLATION AT SER-2</scope>
    <scope>IDENTIFICATION BY MASS SPECTROMETRY</scope>
    <source>
        <tissue>B-cell lymphoma</tissue>
    </source>
</reference>
<reference key="12">
    <citation type="journal article" date="1991" name="Biochemistry">
        <title>An in vitro novel mechanism of regulating the activity of pyruvate kinase M2 by thyroid hormone and fructose 1, 6-bisphosphate.</title>
        <authorList>
            <person name="Ashizawa K."/>
            <person name="McPhie P."/>
            <person name="Lin K.-H."/>
            <person name="Cheng S.-Y."/>
        </authorList>
    </citation>
    <scope>PROTEIN SEQUENCE OF 2-18</scope>
    <scope>FUNCTION</scope>
    <scope>CATALYTIC ACTIVITY</scope>
    <scope>ACTIVITY REGULATION</scope>
    <scope>BIOPHYSICOCHEMICAL PROPERTIES</scope>
    <scope>SUBUNIT</scope>
    <scope>INTERACTION WITH THYROID HORMONE</scope>
</reference>
<reference key="13">
    <citation type="journal article" date="2003" name="Nat. Biotechnol.">
        <title>Exploring proteomes and analyzing protein processing by mass spectrometric identification of sorted N-terminal peptides.</title>
        <authorList>
            <person name="Gevaert K."/>
            <person name="Goethals M."/>
            <person name="Martens L."/>
            <person name="Van Damme J."/>
            <person name="Staes A."/>
            <person name="Thomas G.R."/>
            <person name="Vandekerckhove J."/>
        </authorList>
    </citation>
    <scope>PROTEIN SEQUENCE OF 2-32</scope>
    <source>
        <tissue>Platelet</tissue>
    </source>
</reference>
<reference key="14">
    <citation type="submission" date="2007-03" db="UniProtKB">
        <authorList>
            <person name="Lubec G."/>
            <person name="Vishwanath V."/>
        </authorList>
    </citation>
    <scope>PROTEIN SEQUENCE OF 74-89</scope>
    <scope>IDENTIFICATION BY MASS SPECTROMETRY</scope>
    <source>
        <tissue>Brain</tissue>
        <tissue>Cajal-Retzius cell</tissue>
    </source>
</reference>
<reference key="15">
    <citation type="journal article" date="2015" name="Oncogene">
        <title>TRIM35 Interacts with pyruvate kinase isoform M2 to suppress the Warburg effect and tumorigenicity in hepatocellular carcinoma.</title>
        <authorList>
            <person name="Chen Z."/>
            <person name="Wang Z."/>
            <person name="Guo W."/>
            <person name="Zhang Z."/>
            <person name="Zhao F."/>
            <person name="Zhao Y."/>
            <person name="Jia D."/>
            <person name="Ding J."/>
            <person name="Wang H."/>
            <person name="Yao M."/>
            <person name="He X."/>
        </authorList>
    </citation>
    <scope>PROTEIN SEQUENCE OF 174-186; 295-305 AND 401-422 (ISOFORMS M2/3)</scope>
    <scope>INTERACTION WITH TRIM35 (ISOFORM M2)</scope>
    <scope>SUBCELLULAR LOCATION</scope>
    <scope>MASS SPECTROMETRY</scope>
</reference>
<reference key="16">
    <citation type="journal article" date="1998" name="Mol. Microbiol.">
        <title>Using the yeast two-hybrid system to identify human epithelial cell proteins that bind gonococcal Opa proteins: intracellular gonococci bind pyruvate kinase via their Opa proteins and require host pyruvate for growth.</title>
        <authorList>
            <person name="Williams J.M."/>
            <person name="Chen G.-C."/>
            <person name="Zhu L."/>
            <person name="Rest R.F."/>
        </authorList>
    </citation>
    <scope>NUCLEOTIDE SEQUENCE [MRNA] OF 368-531 (ISOFORM M2)</scope>
</reference>
<reference key="17">
    <citation type="journal article" date="2003" name="FEBS Lett.">
        <title>Interaction between HERC1 and M2-type pyruvate kinase.</title>
        <authorList>
            <person name="Garcia-Gonzalo F.R."/>
            <person name="Cruz C."/>
            <person name="Munoz P."/>
            <person name="Mazurek S."/>
            <person name="Eigenbrodt E."/>
            <person name="Ventura F."/>
            <person name="Bartrons R."/>
            <person name="Rosa J.L."/>
        </authorList>
    </citation>
    <scope>INTERACTION WITH HERC1</scope>
</reference>
<reference key="18">
    <citation type="journal article" date="2003" name="Nature">
        <title>Proteomic characterization of the human centrosome by protein correlation profiling.</title>
        <authorList>
            <person name="Andersen J.S."/>
            <person name="Wilkinson C.J."/>
            <person name="Mayor T."/>
            <person name="Mortensen P."/>
            <person name="Nigg E.A."/>
            <person name="Mann M."/>
        </authorList>
    </citation>
    <scope>IDENTIFICATION BY MASS SPECTROMETRY</scope>
    <source>
        <tissue>Lymphoblast</tissue>
    </source>
</reference>
<reference key="19">
    <citation type="journal article" date="2005" name="Biochem. Biophys. Res. Commun.">
        <title>Proteomic identification of proteins conjugated to ISG15 in mouse and human cells.</title>
        <authorList>
            <person name="Giannakopoulos N.V."/>
            <person name="Luo J.K."/>
            <person name="Papov V."/>
            <person name="Zou W."/>
            <person name="Lenschow D.J."/>
            <person name="Jacobs B.S."/>
            <person name="Borden E.C."/>
            <person name="Li J."/>
            <person name="Virgin H.W."/>
            <person name="Zhang D.E."/>
        </authorList>
    </citation>
    <scope>ISGYLATION</scope>
</reference>
<reference key="20">
    <citation type="journal article" date="2005" name="Nat. Biotechnol.">
        <title>Immunoaffinity profiling of tyrosine phosphorylation in cancer cells.</title>
        <authorList>
            <person name="Rush J."/>
            <person name="Moritz A."/>
            <person name="Lee K.A."/>
            <person name="Guo A."/>
            <person name="Goss V.L."/>
            <person name="Spek E.J."/>
            <person name="Zhang H."/>
            <person name="Zha X.-M."/>
            <person name="Polakiewicz R.D."/>
            <person name="Comb M.J."/>
        </authorList>
    </citation>
    <scope>PHOSPHORYLATION [LARGE SCALE ANALYSIS] AT TYR-105</scope>
    <scope>IDENTIFICATION BY MASS SPECTROMETRY [LARGE SCALE ANALYSIS]</scope>
</reference>
<reference key="21">
    <citation type="journal article" date="2006" name="Cell">
        <title>Global, in vivo, and site-specific phosphorylation dynamics in signaling networks.</title>
        <authorList>
            <person name="Olsen J.V."/>
            <person name="Blagoev B."/>
            <person name="Gnad F."/>
            <person name="Macek B."/>
            <person name="Kumar C."/>
            <person name="Mortensen P."/>
            <person name="Mann M."/>
        </authorList>
    </citation>
    <scope>PHOSPHORYLATION [LARGE SCALE ANALYSIS] AT SER-37</scope>
    <scope>IDENTIFICATION BY MASS SPECTROMETRY [LARGE SCALE ANALYSIS]</scope>
    <source>
        <tissue>Cervix carcinoma</tissue>
    </source>
</reference>
<reference key="22">
    <citation type="journal article" date="2006" name="Nat. Biotechnol.">
        <title>A probability-based approach for high-throughput protein phosphorylation analysis and site localization.</title>
        <authorList>
            <person name="Beausoleil S.A."/>
            <person name="Villen J."/>
            <person name="Gerber S.A."/>
            <person name="Rush J."/>
            <person name="Gygi S.P."/>
        </authorList>
    </citation>
    <scope>PHOSPHORYLATION [LARGE SCALE ANALYSIS] AT SER-37</scope>
    <scope>IDENTIFICATION BY MASS SPECTROMETRY [LARGE SCALE ANALYSIS]</scope>
    <source>
        <tissue>Cervix carcinoma</tissue>
    </source>
</reference>
<reference key="23">
    <citation type="journal article" date="2007" name="Cancer Res.">
        <title>Nuclear translocation of the tumor marker pyruvate kinase M2 induces programmed cell death.</title>
        <authorList>
            <person name="Stetak A."/>
            <person name="Veress R."/>
            <person name="Ovadi J."/>
            <person name="Csermely P."/>
            <person name="Keri G."/>
            <person name="Ullrich A."/>
        </authorList>
    </citation>
    <scope>FUNCTION</scope>
    <scope>SUBCELLULAR LOCATION</scope>
</reference>
<reference key="24">
    <citation type="journal article" date="2008" name="Genes Cells">
        <title>Modulation of M2-type pyruvate kinase activity by the cytoplasmic PML tumor suppressor protein.</title>
        <authorList>
            <person name="Shimada N."/>
            <person name="Shinagawa T."/>
            <person name="Ishii S."/>
        </authorList>
    </citation>
    <scope>INTERACTION WITH PML</scope>
    <scope>ACTIVITY REGULATION</scope>
    <scope>SUBUNIT</scope>
    <scope>SUBCELLULAR LOCATION</scope>
</reference>
<reference key="25">
    <citation type="journal article" date="2008" name="Int. J. Biochem. Cell Biol.">
        <title>Pyruvate kinase isozyme type M2 (PKM2) interacts and cooperates with Oct-4 in regulating transcription.</title>
        <authorList>
            <person name="Lee J."/>
            <person name="Kim H.K."/>
            <person name="Han Y.-M."/>
            <person name="Kim J."/>
        </authorList>
    </citation>
    <scope>INTERACTION WITH POU5F1</scope>
    <scope>IDENTIFICATION BY MASS SPECTROMETRY</scope>
    <scope>FUNCTION</scope>
    <scope>SUBCELLULAR LOCATION</scope>
    <scope>TISSUE SPECIFICITY</scope>
</reference>
<reference key="26">
    <citation type="journal article" date="2008" name="J. Proteome Res.">
        <title>Phosphoproteome of resting human platelets.</title>
        <authorList>
            <person name="Zahedi R.P."/>
            <person name="Lewandrowski U."/>
            <person name="Wiesner J."/>
            <person name="Wortelkamp S."/>
            <person name="Moebius J."/>
            <person name="Schuetz C."/>
            <person name="Walter U."/>
            <person name="Gambaryan S."/>
            <person name="Sickmann A."/>
        </authorList>
    </citation>
    <scope>PHOSPHORYLATION [LARGE SCALE ANALYSIS] AT SER-37</scope>
    <scope>IDENTIFICATION BY MASS SPECTROMETRY [LARGE SCALE ANALYSIS]</scope>
    <source>
        <tissue>Platelet</tissue>
    </source>
</reference>
<reference key="27">
    <citation type="journal article" date="2008" name="Mol. Cell">
        <title>Kinase-selective enrichment enables quantitative phosphoproteomics of the kinome across the cell cycle.</title>
        <authorList>
            <person name="Daub H."/>
            <person name="Olsen J.V."/>
            <person name="Bairlein M."/>
            <person name="Gnad F."/>
            <person name="Oppermann F.S."/>
            <person name="Korner R."/>
            <person name="Greff Z."/>
            <person name="Keri G."/>
            <person name="Stemmann O."/>
            <person name="Mann M."/>
        </authorList>
    </citation>
    <scope>PHOSPHORYLATION [LARGE SCALE ANALYSIS] AT SER-37</scope>
    <scope>IDENTIFICATION BY MASS SPECTROMETRY [LARGE SCALE ANALYSIS]</scope>
    <source>
        <tissue>Cervix carcinoma</tissue>
    </source>
</reference>
<reference key="28">
    <citation type="journal article" date="2008" name="Nature">
        <title>The M2 splice isoform of pyruvate kinase is important for cancer metabolism and tumour growth.</title>
        <authorList>
            <person name="Christofk H.R."/>
            <person name="Vander Heiden M.G."/>
            <person name="Harris M.H."/>
            <person name="Ramanathan A."/>
            <person name="Gerszten R.E."/>
            <person name="Wei R."/>
            <person name="Fleming M.D."/>
            <person name="Schreiber S.L."/>
            <person name="Cantley L.C."/>
        </authorList>
    </citation>
    <scope>FUNCTION (ISOFORMS M1 AND M2)</scope>
    <scope>TISSUE SPECIFICITY (ISOFORMS M1 AND M2)</scope>
    <scope>DEVELOPMENTAL STAGE (ISOFORMS M1 AND M2)</scope>
</reference>
<reference key="29">
    <citation type="journal article" date="2008" name="Proc. Natl. Acad. Sci. U.S.A.">
        <title>A quantitative atlas of mitotic phosphorylation.</title>
        <authorList>
            <person name="Dephoure N."/>
            <person name="Zhou C."/>
            <person name="Villen J."/>
            <person name="Beausoleil S.A."/>
            <person name="Bakalarski C.E."/>
            <person name="Elledge S.J."/>
            <person name="Gygi S.P."/>
        </authorList>
    </citation>
    <scope>PHOSPHORYLATION [LARGE SCALE ANALYSIS] AT SER-37</scope>
    <scope>IDENTIFICATION BY MASS SPECTROMETRY [LARGE SCALE ANALYSIS]</scope>
    <source>
        <tissue>Cervix carcinoma</tissue>
    </source>
</reference>
<reference key="30">
    <citation type="journal article" date="2009" name="Anal. Chem.">
        <title>Lys-N and trypsin cover complementary parts of the phosphoproteome in a refined SCX-based approach.</title>
        <authorList>
            <person name="Gauci S."/>
            <person name="Helbig A.O."/>
            <person name="Slijper M."/>
            <person name="Krijgsveld J."/>
            <person name="Heck A.J."/>
            <person name="Mohammed S."/>
        </authorList>
    </citation>
    <scope>ACETYLATION [LARGE SCALE ANALYSIS] AT SER-2</scope>
    <scope>CLEAVAGE OF INITIATOR METHIONINE [LARGE SCALE ANALYSIS]</scope>
    <scope>IDENTIFICATION BY MASS SPECTROMETRY [LARGE SCALE ANALYSIS]</scope>
</reference>
<reference key="31">
    <citation type="journal article" date="2009" name="Sci. Signal.">
        <title>Quantitative phosphoproteomic analysis of T cell receptor signaling reveals system-wide modulation of protein-protein interactions.</title>
        <authorList>
            <person name="Mayya V."/>
            <person name="Lundgren D.H."/>
            <person name="Hwang S.-I."/>
            <person name="Rezaul K."/>
            <person name="Wu L."/>
            <person name="Eng J.K."/>
            <person name="Rodionov V."/>
            <person name="Han D.K."/>
        </authorList>
    </citation>
    <scope>PHOSPHORYLATION [LARGE SCALE ANALYSIS] AT SER-37; TYR-175 AND THR-195</scope>
    <scope>IDENTIFICATION BY MASS SPECTROMETRY [LARGE SCALE ANALYSIS]</scope>
    <source>
        <tissue>Leukemic T-cell</tissue>
    </source>
</reference>
<reference key="32">
    <citation type="journal article" date="2009" name="Science">
        <title>Lysine acetylation targets protein complexes and co-regulates major cellular functions.</title>
        <authorList>
            <person name="Choudhary C."/>
            <person name="Kumar C."/>
            <person name="Gnad F."/>
            <person name="Nielsen M.L."/>
            <person name="Rehman M."/>
            <person name="Walther T.C."/>
            <person name="Olsen J.V."/>
            <person name="Mann M."/>
        </authorList>
    </citation>
    <scope>ACETYLATION [LARGE SCALE ANALYSIS] AT LYS-62; LYS-89; LYS-166; LYS-266 AND LYS-433</scope>
    <scope>IDENTIFICATION BY MASS SPECTROMETRY [LARGE SCALE ANALYSIS]</scope>
</reference>
<reference key="33">
    <citation type="journal article" date="2010" name="Science">
        <title>Evidence for an alternative glycolytic pathway in rapidly proliferating cells.</title>
        <authorList>
            <person name="Vander Heiden M.G."/>
            <person name="Locasale J.W."/>
            <person name="Swanson K.D."/>
            <person name="Sharfi H."/>
            <person name="Heffron G.J."/>
            <person name="Amador-Noguez D."/>
            <person name="Christofk H.R."/>
            <person name="Wagner G."/>
            <person name="Rabinowitz J.D."/>
            <person name="Asara J.M."/>
            <person name="Cantley L.C."/>
        </authorList>
    </citation>
    <scope>FUNCTION (ISOFORMS M1 AND M2)</scope>
    <scope>CATALYTIC ACTIVITY (ISOFORMS M1 AND M2)</scope>
</reference>
<reference key="34">
    <citation type="journal article" date="2010" name="Sci. Signal.">
        <title>Quantitative phosphoproteomics reveals widespread full phosphorylation site occupancy during mitosis.</title>
        <authorList>
            <person name="Olsen J.V."/>
            <person name="Vermeulen M."/>
            <person name="Santamaria A."/>
            <person name="Kumar C."/>
            <person name="Miller M.L."/>
            <person name="Jensen L.J."/>
            <person name="Gnad F."/>
            <person name="Cox J."/>
            <person name="Jensen T.S."/>
            <person name="Nigg E.A."/>
            <person name="Brunak S."/>
            <person name="Mann M."/>
        </authorList>
    </citation>
    <scope>PHOSPHORYLATION [LARGE SCALE ANALYSIS] AT SER-37</scope>
    <scope>IDENTIFICATION BY MASS SPECTROMETRY [LARGE SCALE ANALYSIS]</scope>
    <source>
        <tissue>Cervix carcinoma</tissue>
    </source>
</reference>
<reference key="35">
    <citation type="journal article" date="2011" name="BMC Syst. Biol.">
        <title>Initial characterization of the human central proteome.</title>
        <authorList>
            <person name="Burkard T.R."/>
            <person name="Planyavsky M."/>
            <person name="Kaupe I."/>
            <person name="Breitwieser F.P."/>
            <person name="Buerckstuemmer T."/>
            <person name="Bennett K.L."/>
            <person name="Superti-Furga G."/>
            <person name="Colinge J."/>
        </authorList>
    </citation>
    <scope>IDENTIFICATION BY MASS SPECTROMETRY [LARGE SCALE ANALYSIS]</scope>
</reference>
<reference key="36">
    <citation type="journal article" date="2011" name="Cell">
        <title>Pyruvate kinase M2 is a PHD3-stimulated coactivator for hypoxia-inducible factor 1.</title>
        <authorList>
            <person name="Luo W."/>
            <person name="Hu H."/>
            <person name="Chang R."/>
            <person name="Zhong J."/>
            <person name="Knabel M."/>
            <person name="O'Meally R."/>
            <person name="Cole R.N."/>
            <person name="Pandey A."/>
            <person name="Semenza G.L."/>
        </authorList>
    </citation>
    <scope>INTERACTION WITH EGLN3 AND HIF1A</scope>
    <scope>SUBCELLULAR LOCATION</scope>
    <scope>INDUCTION</scope>
    <scope>FUNCTION</scope>
    <scope>IDENTIFICATION BY MASS SPECTROMETRY</scope>
    <scope>HYDROXYLATION AT PRO-403 AND PRO-408</scope>
    <scope>MUTAGENESIS OF PRO-403 AND PRO-408</scope>
</reference>
<reference key="37">
    <citation type="journal article" date="2011" name="Cell Res.">
        <title>The oxygen sensor PHD3 limits glycolysis under hypoxia via direct binding to pyruvate kinase.</title>
        <authorList>
            <person name="Chen N."/>
            <person name="Rinner O."/>
            <person name="Czernik D."/>
            <person name="Nytko K.J."/>
            <person name="Zheng D."/>
            <person name="Stiehl D.P."/>
            <person name="Zamboni N."/>
            <person name="Gstaiger M."/>
            <person name="Frei C."/>
        </authorList>
    </citation>
    <scope>INTERACTION WITH EGLN3</scope>
</reference>
<reference key="38">
    <citation type="journal article" date="2011" name="Mol. Cell">
        <title>Acetylation targets the M2 isoform of pyruvate kinase for degradation through chaperone-mediated autophagy and promotes tumor growth.</title>
        <authorList>
            <person name="Lv L."/>
            <person name="Li D."/>
            <person name="Zhao D."/>
            <person name="Lin R."/>
            <person name="Chu Y."/>
            <person name="Zhang H."/>
            <person name="Zha Z."/>
            <person name="Liu Y."/>
            <person name="Li Z."/>
            <person name="Xu Y."/>
            <person name="Wang G."/>
            <person name="Huang Y."/>
            <person name="Xiong Y."/>
            <person name="Guan K.L."/>
            <person name="Lei Q.Y."/>
        </authorList>
    </citation>
    <scope>ACETYLATION AT LYS-305</scope>
</reference>
<reference key="39">
    <citation type="journal article" date="2011" name="Nature">
        <title>Nuclear PKM2 regulates beta-catenin transactivation upon EGFR activation.</title>
        <authorList>
            <person name="Yang W."/>
            <person name="Xia Y."/>
            <person name="Ji H."/>
            <person name="Zheng Y."/>
            <person name="Liang J."/>
            <person name="Huang W."/>
            <person name="Gao X."/>
            <person name="Aldape K."/>
            <person name="Lu Z."/>
        </authorList>
    </citation>
    <scope>FUNCTION (ISOFORM M2)</scope>
    <scope>SUBCELLULAR LOCATION (ISOFORM M2)</scope>
    <scope>INTERACTION WITH CTNNB1 (ISOFORM M2)</scope>
    <scope>MUTAGENESIS OF LYS-367 AND LYS-433</scope>
</reference>
<reference key="40">
    <citation type="journal article" date="2011" name="Sci. Signal.">
        <title>System-wide temporal characterization of the proteome and phosphoproteome of human embryonic stem cell differentiation.</title>
        <authorList>
            <person name="Rigbolt K.T."/>
            <person name="Prokhorova T.A."/>
            <person name="Akimov V."/>
            <person name="Henningsen J."/>
            <person name="Johansen P.T."/>
            <person name="Kratchmarova I."/>
            <person name="Kassem M."/>
            <person name="Mann M."/>
            <person name="Olsen J.V."/>
            <person name="Blagoev B."/>
        </authorList>
    </citation>
    <scope>PHOSPHORYLATION [LARGE SCALE ANALYSIS] AT SER-37</scope>
    <scope>IDENTIFICATION BY MASS SPECTROMETRY [LARGE SCALE ANALYSIS]</scope>
</reference>
<reference key="41">
    <citation type="journal article" date="2012" name="Cell">
        <title>PKM2 phosphorylates histone H3 and promotes gene transcription and tumorigenesis.</title>
        <authorList>
            <person name="Yang W."/>
            <person name="Xia Y."/>
            <person name="Hawke D."/>
            <person name="Li X."/>
            <person name="Liang J."/>
            <person name="Xing D."/>
            <person name="Aldape K."/>
            <person name="Hunter T."/>
            <person name="Alfred Yung W.K."/>
            <person name="Lu Z."/>
        </authorList>
    </citation>
    <scope>FUNCTION (ISOFORM M2)</scope>
    <scope>CATALYTIC ACTIVITY (ISOFORM M2)</scope>
    <scope>SUBCELLULAR LOCATION (ISOFORM M2)</scope>
    <scope>MUTAGENESIS OF LYS-367 AND LYS-433</scope>
</reference>
<reference key="42">
    <citation type="journal article" date="2012" name="Mol. Cell">
        <title>Pyruvate kinase M2 regulates gene transcription by acting as a protein kinase.</title>
        <authorList>
            <person name="Gao X."/>
            <person name="Wang H."/>
            <person name="Yang J.J."/>
            <person name="Liu X."/>
            <person name="Liu Z.R."/>
        </authorList>
    </citation>
    <scope>FUNCTION (ISOFORM M2)</scope>
    <scope>CATALYTIC ACTIVITY (ISOFORM M2)</scope>
    <scope>SUBCELLULAR LOCATION (ISOFORM M2)</scope>
    <scope>SUBUNIT (ISOFORM M2)</scope>
    <scope>MUTAGENESIS OF ARG-399</scope>
</reference>
<reference key="43">
    <citation type="journal article" date="2013" name="J. Proteome Res.">
        <title>Toward a comprehensive characterization of a human cancer cell phosphoproteome.</title>
        <authorList>
            <person name="Zhou H."/>
            <person name="Di Palma S."/>
            <person name="Preisinger C."/>
            <person name="Peng M."/>
            <person name="Polat A.N."/>
            <person name="Heck A.J."/>
            <person name="Mohammed S."/>
        </authorList>
    </citation>
    <scope>PHOSPHORYLATION [LARGE SCALE ANALYSIS] AT SER-37; THR-41; TYR-105 AND SER-127</scope>
    <scope>IDENTIFICATION BY MASS SPECTROMETRY [LARGE SCALE ANALYSIS]</scope>
    <source>
        <tissue>Cervix carcinoma</tissue>
        <tissue>Erythroleukemia</tissue>
    </source>
</reference>
<reference key="44">
    <citation type="journal article" date="2013" name="Mol. Cell">
        <title>Mitogenic and oncogenic stimulation of K433 acetylation promotes PKM2 protein kinase activity and nuclear localization.</title>
        <authorList>
            <person name="Lv L."/>
            <person name="Xu Y.P."/>
            <person name="Zhao D."/>
            <person name="Li F.L."/>
            <person name="Wang W."/>
            <person name="Sasaki N."/>
            <person name="Jiang Y."/>
            <person name="Zhou X."/>
            <person name="Li T.T."/>
            <person name="Guan K.L."/>
            <person name="Lei Q.Y."/>
            <person name="Xiong Y."/>
        </authorList>
    </citation>
    <scope>FUNCTION (ISOFORM M2)</scope>
    <scope>CATALYTIC ACTIVITY (ISOFORM M2)</scope>
    <scope>ACTIVITY REGULATION (ISOFORM M2)</scope>
    <scope>SUBCELLULAR LOCATION (ISOFORM M2)</scope>
    <scope>SUBUNIT (ISOFORM M2)</scope>
    <scope>ACETYLATION AT LYS-433 (ISOFORM M2)</scope>
    <scope>MUTAGENESIS OF LYS-433</scope>
</reference>
<reference key="45">
    <citation type="journal article" date="2014" name="J. Proteomics">
        <title>An enzyme assisted RP-RPLC approach for in-depth analysis of human liver phosphoproteome.</title>
        <authorList>
            <person name="Bian Y."/>
            <person name="Song C."/>
            <person name="Cheng K."/>
            <person name="Dong M."/>
            <person name="Wang F."/>
            <person name="Huang J."/>
            <person name="Sun D."/>
            <person name="Wang L."/>
            <person name="Ye M."/>
            <person name="Zou H."/>
        </authorList>
    </citation>
    <scope>PHOSPHORYLATION [LARGE SCALE ANALYSIS] AT SER-37</scope>
    <scope>IDENTIFICATION BY MASS SPECTROMETRY [LARGE SCALE ANALYSIS]</scope>
    <source>
        <tissue>Liver</tissue>
    </source>
</reference>
<reference key="46">
    <citation type="journal article" date="2014" name="Mol. Cell. Proteomics">
        <title>Immunoaffinity enrichment and mass spectrometry analysis of protein methylation.</title>
        <authorList>
            <person name="Guo A."/>
            <person name="Gu H."/>
            <person name="Zhou J."/>
            <person name="Mulhern D."/>
            <person name="Wang Y."/>
            <person name="Lee K.A."/>
            <person name="Yang V."/>
            <person name="Aguiar M."/>
            <person name="Kornhauser J."/>
            <person name="Jia X."/>
            <person name="Ren J."/>
            <person name="Beausoleil S.A."/>
            <person name="Silva J.C."/>
            <person name="Vemulapalli V."/>
            <person name="Bedford M.T."/>
            <person name="Comb M.J."/>
        </authorList>
    </citation>
    <scope>METHYLATION [LARGE SCALE ANALYSIS] AT LYS-3</scope>
    <scope>IDENTIFICATION BY MASS SPECTROMETRY [LARGE SCALE ANALYSIS]</scope>
    <source>
        <tissue>Colon carcinoma</tissue>
    </source>
</reference>
<reference key="47">
    <citation type="journal article" date="2014" name="Proc. Natl. Acad. Sci. U.S.A.">
        <title>Mapping of SUMO sites and analysis of SUMOylation changes induced by external stimuli.</title>
        <authorList>
            <person name="Impens F."/>
            <person name="Radoshevich L."/>
            <person name="Cossart P."/>
            <person name="Ribet D."/>
        </authorList>
    </citation>
    <scope>SUMOYLATION [LARGE SCALE ANALYSIS] AT LYS-166</scope>
    <scope>IDENTIFICATION BY MASS SPECTROMETRY [LARGE SCALE ANALYSIS]</scope>
</reference>
<reference key="48">
    <citation type="journal article" date="2015" name="Proteomics">
        <title>N-terminome analysis of the human mitochondrial proteome.</title>
        <authorList>
            <person name="Vaca Jacome A.S."/>
            <person name="Rabilloud T."/>
            <person name="Schaeffer-Reiss C."/>
            <person name="Rompais M."/>
            <person name="Ayoub D."/>
            <person name="Lane L."/>
            <person name="Bairoch A."/>
            <person name="Van Dorsselaer A."/>
            <person name="Carapito C."/>
        </authorList>
    </citation>
    <scope>ACETYLATION [LARGE SCALE ANALYSIS] AT SER-2</scope>
    <scope>CLEAVAGE OF INITIATOR METHIONINE [LARGE SCALE ANALYSIS]</scope>
    <scope>IDENTIFICATION BY MASS SPECTROMETRY [LARGE SCALE ANALYSIS]</scope>
</reference>
<reference key="49">
    <citation type="journal article" date="2016" name="Arterioscler. Thromb. Vasc. Biol.">
        <title>JMJD8 Regulates Angiogenic Sprouting and Cellular Metabolism by Interacting With Pyruvate Kinase M2 in Endothelial Cells.</title>
        <authorList>
            <person name="Boeckel J.N."/>
            <person name="Derlet A."/>
            <person name="Glaser S.F."/>
            <person name="Luczak A."/>
            <person name="Lucas T."/>
            <person name="Heumueller A.W."/>
            <person name="Krueger M."/>
            <person name="Zehendner C.M."/>
            <person name="Kaluza D."/>
            <person name="Doddaballapur A."/>
            <person name="Ohtani K."/>
            <person name="Treguer K."/>
            <person name="Dimmeler S."/>
        </authorList>
    </citation>
    <scope>INTERACTION WITH JMJD8</scope>
</reference>
<reference key="50">
    <citation type="journal article" date="2016" name="Int. J. Oncol.">
        <title>TSC22D2 interacts with PKM2 and inhibits cell growth in colorectal cancer.</title>
        <authorList>
            <person name="Liang F."/>
            <person name="Li Q."/>
            <person name="Li X."/>
            <person name="Li Z."/>
            <person name="Gong Z."/>
            <person name="Deng H."/>
            <person name="Xiang B."/>
            <person name="Zhou M."/>
            <person name="Li X."/>
            <person name="Li G."/>
            <person name="Zeng Z."/>
            <person name="Xiong W."/>
        </authorList>
    </citation>
    <scope>INTERACTION WITH TSC22D2</scope>
    <scope>SUBCELLULAR LOCATION</scope>
</reference>
<reference key="51">
    <citation type="journal article" date="2016" name="Proc. Natl. Acad. Sci. U.S.A.">
        <title>SIRT6 deacetylates PKM2 to suppress its nuclear localization and oncogenic functions.</title>
        <authorList>
            <person name="Bhardwaj A."/>
            <person name="Das S."/>
        </authorList>
    </citation>
    <scope>FUNCTION (ISOFORM M2)</scope>
    <scope>SUBCELLULAR LOCATION (ISOFORM M2)</scope>
    <scope>ACETYLATION AT LYS-433 (ISOFORM M2)</scope>
    <scope>DEACETYLATION BY SIRT6 (ISOFORM M2)</scope>
    <scope>MUTAGENESIS OF LYS-433</scope>
</reference>
<reference key="52">
    <citation type="journal article" date="2017" name="Nat. Struct. Mol. Biol.">
        <title>Site-specific mapping of the human SUMO proteome reveals co-modification with phosphorylation.</title>
        <authorList>
            <person name="Hendriks I.A."/>
            <person name="Lyon D."/>
            <person name="Young C."/>
            <person name="Jensen L.J."/>
            <person name="Vertegaal A.C."/>
            <person name="Nielsen M.L."/>
        </authorList>
    </citation>
    <scope>SUMOYLATION [LARGE SCALE ANALYSIS] AT LYS-115; LYS-266 AND LYS-270</scope>
    <scope>IDENTIFICATION BY MASS SPECTROMETRY [LARGE SCALE ANALYSIS]</scope>
</reference>
<reference key="53">
    <citation type="journal article" date="2019" name="Nature">
        <title>Metabolic reprogramming by the S-nitroso-CoA reductase system protects against kidney injury.</title>
        <authorList>
            <person name="Zhou H.L."/>
            <person name="Zhang R."/>
            <person name="Anand P."/>
            <person name="Stomberski C.T."/>
            <person name="Qian Z."/>
            <person name="Hausladen A."/>
            <person name="Wang L."/>
            <person name="Rhee E.P."/>
            <person name="Parikh S.M."/>
            <person name="Karumanchi S.A."/>
            <person name="Stamler J.S."/>
        </authorList>
    </citation>
    <scope>S-NITROSYLATION AT CYS-423 AND CYS-424 (ISOFORM M2)</scope>
    <scope>MUTAGENESIS OF 423-CYS-CYS-424</scope>
</reference>
<reference key="54">
    <citation type="journal article" date="2020" name="EBioMedicine">
        <title>TRAF4 acts as a fate checkpoint to regulate the adipogenic differentiation of MSCs by activating PKM2.</title>
        <authorList>
            <person name="Cen S."/>
            <person name="Li J."/>
            <person name="Cai Z."/>
            <person name="Pan Y."/>
            <person name="Sun Z."/>
            <person name="Li Z."/>
            <person name="Ye G."/>
            <person name="Zheng G."/>
            <person name="Li M."/>
            <person name="Liu W."/>
            <person name="Yu W."/>
            <person name="Wang S."/>
            <person name="Xie Z."/>
            <person name="Wang P."/>
            <person name="Shen H."/>
        </authorList>
    </citation>
    <scope>INTERACTION WITH TRAF4</scope>
    <scope>SUBCELLULAR LOCATION</scope>
</reference>
<reference key="55">
    <citation type="journal article" date="2005" name="Biochemistry">
        <title>Structural basis for tumor pyruvate kinase M2 allosteric regulation and catalysis.</title>
        <authorList>
            <person name="Dombrauckas J.D."/>
            <person name="Santarsiero B.D."/>
            <person name="Mesecar A.D."/>
        </authorList>
    </citation>
    <scope>X-RAY CRYSTALLOGRAPHY (2.82 ANGSTROMS) OF ISOFORM M2 IN COMPLEX WITH OXALATE AND FBP</scope>
    <scope>CATALYTIC ACTIVITY</scope>
    <scope>SUBUNIT</scope>
    <scope>ENZYME MECHANISM</scope>
    <scope>ACTIVITY REGULATION</scope>
    <scope>FUNCTION</scope>
    <scope>BIOPHYSICOCHEMICAL PROPERTIES</scope>
</reference>
<reference key="56">
    <citation type="submission" date="2005-05" db="PDB data bank">
        <title>Structure of human muscle pyruvate kinase (PKM2).</title>
        <authorList>
            <consortium name="Structural genomics consortium (SGC)"/>
        </authorList>
    </citation>
    <scope>X-RAY CRYSTALLOGRAPHY (2.2 ANGSTROMS)</scope>
</reference>
<reference key="57">
    <citation type="journal article" date="2008" name="Nature">
        <title>Pyruvate kinase M2 is a phosphotyrosine-binding protein.</title>
        <authorList>
            <person name="Christofk H.R."/>
            <person name="Vander Heiden M.G."/>
            <person name="Wu N."/>
            <person name="Asara J.M."/>
            <person name="Cantley L.C."/>
        </authorList>
    </citation>
    <scope>X-RAY CRYSTALLOGRAPHY (2.03 ANGSTROMS) OF 14-531 ALONE AND IN COMPLEX WITH FBP</scope>
    <scope>FUNCTION</scope>
    <scope>ACTIVITY REGULATION</scope>
</reference>
<reference key="58">
    <citation type="journal article" date="2012" name="Nature">
        <title>Serine is a natural ligand and allosteric activator of pyruvate kinase M2.</title>
        <authorList>
            <person name="Chaneton B."/>
            <person name="Hillmann P."/>
            <person name="Zheng L."/>
            <person name="Martin A.C."/>
            <person name="Maddocks O.D."/>
            <person name="Chokkathukalam A."/>
            <person name="Coyle J.E."/>
            <person name="Jankevics A."/>
            <person name="Holding F.P."/>
            <person name="Vousden K.H."/>
            <person name="Frezza C."/>
            <person name="O'Reilly M."/>
            <person name="Gottlieb E."/>
        </authorList>
    </citation>
    <scope>X-RAY CRYSTALLOGRAPHY (2.3 ANGSTROMS) OF 2-531</scope>
    <scope>ACTIVITY REGULATION BY SERINE</scope>
    <scope>MAGNESIUM-BINDING SITES</scope>
    <scope>SUBUNIT</scope>
    <scope>MUTAGENESIS OF SER-437 AND HIS-464</scope>
</reference>
<reference key="59">
    <citation type="journal article" date="2013" name="Proc. Natl. Acad. Sci. U.S.A.">
        <title>M2 pyruvate kinase provides a mechanism for nutrient sensing and regulation of cell proliferation.</title>
        <authorList>
            <person name="Morgan H.P."/>
            <person name="O'Reilly F.J."/>
            <person name="Wear M.A."/>
            <person name="O'Neill J.R."/>
            <person name="Fothergill-Gilmore L.A."/>
            <person name="Hupp T."/>
            <person name="Walkinshaw M.D."/>
        </authorList>
    </citation>
    <scope>X-RAY CRYSTALLOGRAPHY (2.55 ANGSTROMS) IN COMPLEX WITH ATP; FRUCTOSE-1-6-DIPHOSPHATE; MAGNESIUM IONS AND POTASSIUM IONS</scope>
</reference>
<evidence type="ECO:0000250" key="1">
    <source>
        <dbReference type="UniProtKB" id="P00549"/>
    </source>
</evidence>
<evidence type="ECO:0000250" key="2">
    <source>
        <dbReference type="UniProtKB" id="P11980"/>
    </source>
</evidence>
<evidence type="ECO:0000250" key="3">
    <source>
        <dbReference type="UniProtKB" id="P30613"/>
    </source>
</evidence>
<evidence type="ECO:0000250" key="4">
    <source>
        <dbReference type="UniProtKB" id="P52480"/>
    </source>
</evidence>
<evidence type="ECO:0000269" key="5">
    <source>
    </source>
</evidence>
<evidence type="ECO:0000269" key="6">
    <source>
    </source>
</evidence>
<evidence type="ECO:0000269" key="7">
    <source>
    </source>
</evidence>
<evidence type="ECO:0000269" key="8">
    <source>
    </source>
</evidence>
<evidence type="ECO:0000269" key="9">
    <source>
    </source>
</evidence>
<evidence type="ECO:0000269" key="10">
    <source>
    </source>
</evidence>
<evidence type="ECO:0000269" key="11">
    <source>
    </source>
</evidence>
<evidence type="ECO:0000269" key="12">
    <source>
    </source>
</evidence>
<evidence type="ECO:0000269" key="13">
    <source>
    </source>
</evidence>
<evidence type="ECO:0000269" key="14">
    <source>
    </source>
</evidence>
<evidence type="ECO:0000269" key="15">
    <source>
    </source>
</evidence>
<evidence type="ECO:0000269" key="16">
    <source>
    </source>
</evidence>
<evidence type="ECO:0000269" key="17">
    <source>
    </source>
</evidence>
<evidence type="ECO:0000269" key="18">
    <source>
    </source>
</evidence>
<evidence type="ECO:0000269" key="19">
    <source>
    </source>
</evidence>
<evidence type="ECO:0000269" key="20">
    <source>
    </source>
</evidence>
<evidence type="ECO:0000269" key="21">
    <source>
    </source>
</evidence>
<evidence type="ECO:0000269" key="22">
    <source>
    </source>
</evidence>
<evidence type="ECO:0000269" key="23">
    <source>
    </source>
</evidence>
<evidence type="ECO:0000269" key="24">
    <source>
    </source>
</evidence>
<evidence type="ECO:0000269" key="25">
    <source>
    </source>
</evidence>
<evidence type="ECO:0000269" key="26">
    <source>
    </source>
</evidence>
<evidence type="ECO:0000269" key="27">
    <source>
    </source>
</evidence>
<evidence type="ECO:0000269" key="28">
    <source>
    </source>
</evidence>
<evidence type="ECO:0000269" key="29">
    <source>
    </source>
</evidence>
<evidence type="ECO:0000269" key="30">
    <source>
    </source>
</evidence>
<evidence type="ECO:0000269" key="31">
    <source>
    </source>
</evidence>
<evidence type="ECO:0000269" key="32">
    <source>
    </source>
</evidence>
<evidence type="ECO:0000269" key="33">
    <source ref="11"/>
</evidence>
<evidence type="ECO:0000303" key="34">
    <source>
    </source>
</evidence>
<evidence type="ECO:0000303" key="35">
    <source>
    </source>
</evidence>
<evidence type="ECO:0000303" key="36">
    <source>
    </source>
</evidence>
<evidence type="ECO:0000303" key="37">
    <source>
    </source>
</evidence>
<evidence type="ECO:0000305" key="38"/>
<evidence type="ECO:0000305" key="39">
    <source>
    </source>
</evidence>
<evidence type="ECO:0007744" key="40">
    <source>
        <dbReference type="PDB" id="1T5A"/>
    </source>
</evidence>
<evidence type="ECO:0007744" key="41">
    <source>
        <dbReference type="PDB" id="4FXF"/>
    </source>
</evidence>
<evidence type="ECO:0007744" key="42">
    <source>
    </source>
</evidence>
<evidence type="ECO:0007744" key="43">
    <source>
    </source>
</evidence>
<evidence type="ECO:0007744" key="44">
    <source>
    </source>
</evidence>
<evidence type="ECO:0007744" key="45">
    <source>
    </source>
</evidence>
<evidence type="ECO:0007744" key="46">
    <source>
    </source>
</evidence>
<evidence type="ECO:0007744" key="47">
    <source>
    </source>
</evidence>
<evidence type="ECO:0007744" key="48">
    <source>
    </source>
</evidence>
<evidence type="ECO:0007744" key="49">
    <source>
    </source>
</evidence>
<evidence type="ECO:0007744" key="50">
    <source>
    </source>
</evidence>
<evidence type="ECO:0007744" key="51">
    <source>
    </source>
</evidence>
<evidence type="ECO:0007744" key="52">
    <source>
    </source>
</evidence>
<evidence type="ECO:0007744" key="53">
    <source>
    </source>
</evidence>
<evidence type="ECO:0007744" key="54">
    <source>
    </source>
</evidence>
<evidence type="ECO:0007744" key="55">
    <source>
    </source>
</evidence>
<evidence type="ECO:0007744" key="56">
    <source>
    </source>
</evidence>
<evidence type="ECO:0007744" key="57">
    <source>
    </source>
</evidence>
<evidence type="ECO:0007744" key="58">
    <source>
    </source>
</evidence>
<evidence type="ECO:0007829" key="59">
    <source>
        <dbReference type="PDB" id="1ZJH"/>
    </source>
</evidence>
<evidence type="ECO:0007829" key="60">
    <source>
        <dbReference type="PDB" id="3G2G"/>
    </source>
</evidence>
<evidence type="ECO:0007829" key="61">
    <source>
        <dbReference type="PDB" id="3SRF"/>
    </source>
</evidence>
<evidence type="ECO:0007829" key="62">
    <source>
        <dbReference type="PDB" id="4B2D"/>
    </source>
</evidence>
<evidence type="ECO:0007829" key="63">
    <source>
        <dbReference type="PDB" id="4QGC"/>
    </source>
</evidence>
<evidence type="ECO:0007829" key="64">
    <source>
        <dbReference type="PDB" id="4WJ8"/>
    </source>
</evidence>
<evidence type="ECO:0007829" key="65">
    <source>
        <dbReference type="PDB" id="5X1V"/>
    </source>
</evidence>
<evidence type="ECO:0007829" key="66">
    <source>
        <dbReference type="PDB" id="6B6U"/>
    </source>
</evidence>
<evidence type="ECO:0007829" key="67">
    <source>
        <dbReference type="PDB" id="6GG6"/>
    </source>
</evidence>
<evidence type="ECO:0007829" key="68">
    <source>
        <dbReference type="PDB" id="6NU5"/>
    </source>
</evidence>
<evidence type="ECO:0007829" key="69">
    <source>
        <dbReference type="PDB" id="6V74"/>
    </source>
</evidence>
<evidence type="ECO:0007829" key="70">
    <source>
        <dbReference type="PDB" id="6WP4"/>
    </source>
</evidence>
<organism>
    <name type="scientific">Homo sapiens</name>
    <name type="common">Human</name>
    <dbReference type="NCBI Taxonomy" id="9606"/>
    <lineage>
        <taxon>Eukaryota</taxon>
        <taxon>Metazoa</taxon>
        <taxon>Chordata</taxon>
        <taxon>Craniata</taxon>
        <taxon>Vertebrata</taxon>
        <taxon>Euteleostomi</taxon>
        <taxon>Mammalia</taxon>
        <taxon>Eutheria</taxon>
        <taxon>Euarchontoglires</taxon>
        <taxon>Primates</taxon>
        <taxon>Haplorrhini</taxon>
        <taxon>Catarrhini</taxon>
        <taxon>Hominidae</taxon>
        <taxon>Homo</taxon>
    </lineage>
</organism>
<comment type="function">
    <text evidence="8 15 16">Catalyzes the final rate-limiting step of glycolysis by mediating the transfer of a phosphoryl group from phosphoenolpyruvate (PEP) to ADP, generating ATP (PubMed:15996096, PubMed:1854723, PubMed:20847263). The ratio between the highly active tetrameric form and nearly inactive dimeric form determines whether glucose carbons are channeled to biosynthetic processes or used for glycolytic ATP production (PubMed:15996096, PubMed:1854723, PubMed:20847263). The transition between the 2 forms contributes to the control of glycolysis and is important for tumor cell proliferation and survival (PubMed:15996096, PubMed:1854723, PubMed:20847263).</text>
</comment>
<comment type="function">
    <molecule>Isoform M2</molecule>
    <text evidence="4 10 11 14 16 18 20 21 22 25 27">Isoform specifically expressed during embryogenesis that has low pyruvate kinase activity by itself and requires allosteric activation by D-fructose 1,6-bisphosphate (FBP) for pyruvate kinase activity (PubMed:18337823, PubMed:20847263). In addition to its pyruvate kinase activity in the cytoplasm, also acts as a regulator of transcription in the nucleus by acting as a protein kinase (PubMed:18191611, PubMed:21620138, PubMed:22056988, PubMed:22306293, PubMed:22901803, PubMed:24120661). Translocates into the nucleus in response to various signals, such as EGF receptor activation, and homodimerizes, leading to its conversion into a protein threonine- and tyrosine-protein kinase (PubMed:22056988, PubMed:22306293, PubMed:22901803, PubMed:24120661, PubMed:26787900). Catalyzes phosphorylation of STAT3 at 'Tyr-705' and histone H3 at 'Thr-11' (H3T11ph), leading to activate transcription (PubMed:22306293, PubMed:22901803, PubMed:24120661). Its ability to activate transcription plays a role in cancer cells by promoting cell proliferation and promote tumorigenesis (PubMed:18337823, PubMed:22901803, PubMed:26787900). Promotes the expression of the immune checkpoint protein CD274 in BMAL1-deficient macrophages (By similarity). May also act as a translation regulator for a subset of mRNAs, independently of its pyruvate kinase activity: associates with subpools of endoplasmic reticulum-associated ribosomes, binds directly to the mRNAs translated at the endoplasmic reticulum and promotes translation of these endoplasmic reticulum-destined mRNAs (By similarity). Plays a role in caspase independent cell death of tumor cells (PubMed:17308100).</text>
</comment>
<comment type="function">
    <molecule>Isoform M1</molecule>
    <text evidence="14 16">Pyruvate kinase isoform expressed in adult tissues, which replaces isoform M2 after birth (PubMed:18337823). In contrast to isoform M2, has high pyruvate kinase activity by itself and does not require allosteric activation by D-fructose 1,6-bisphosphate (FBP) for activity (PubMed:20847263).</text>
</comment>
<comment type="catalytic activity">
    <molecule>Isoform M2</molecule>
    <reaction evidence="8 15 16">
        <text>pyruvate + ATP = phosphoenolpyruvate + ADP + H(+)</text>
        <dbReference type="Rhea" id="RHEA:18157"/>
        <dbReference type="ChEBI" id="CHEBI:15361"/>
        <dbReference type="ChEBI" id="CHEBI:15378"/>
        <dbReference type="ChEBI" id="CHEBI:30616"/>
        <dbReference type="ChEBI" id="CHEBI:58702"/>
        <dbReference type="ChEBI" id="CHEBI:456216"/>
        <dbReference type="EC" id="2.7.1.40"/>
    </reaction>
    <physiologicalReaction direction="right-to-left" evidence="8 15 16">
        <dbReference type="Rhea" id="RHEA:18159"/>
    </physiologicalReaction>
</comment>
<comment type="catalytic activity">
    <molecule>Isoform M2</molecule>
    <reaction evidence="21 25">
        <text>L-tyrosyl-[protein] + ATP = O-phospho-L-tyrosyl-[protein] + ADP + H(+)</text>
        <dbReference type="Rhea" id="RHEA:10596"/>
        <dbReference type="Rhea" id="RHEA-COMP:10136"/>
        <dbReference type="Rhea" id="RHEA-COMP:20101"/>
        <dbReference type="ChEBI" id="CHEBI:15378"/>
        <dbReference type="ChEBI" id="CHEBI:30616"/>
        <dbReference type="ChEBI" id="CHEBI:46858"/>
        <dbReference type="ChEBI" id="CHEBI:61978"/>
        <dbReference type="ChEBI" id="CHEBI:456216"/>
        <dbReference type="EC" id="2.7.10.2"/>
    </reaction>
    <physiologicalReaction direction="left-to-right" evidence="21 25">
        <dbReference type="Rhea" id="RHEA:10597"/>
    </physiologicalReaction>
</comment>
<comment type="catalytic activity">
    <molecule>Isoform M2</molecule>
    <reaction evidence="22 25">
        <text>L-threonyl-[protein] + ATP = O-phospho-L-threonyl-[protein] + ADP + H(+)</text>
        <dbReference type="Rhea" id="RHEA:46608"/>
        <dbReference type="Rhea" id="RHEA-COMP:11060"/>
        <dbReference type="Rhea" id="RHEA-COMP:11605"/>
        <dbReference type="ChEBI" id="CHEBI:15378"/>
        <dbReference type="ChEBI" id="CHEBI:30013"/>
        <dbReference type="ChEBI" id="CHEBI:30616"/>
        <dbReference type="ChEBI" id="CHEBI:61977"/>
        <dbReference type="ChEBI" id="CHEBI:456216"/>
        <dbReference type="EC" id="2.7.11.1"/>
    </reaction>
    <physiologicalReaction direction="left-to-right" evidence="22 25">
        <dbReference type="Rhea" id="RHEA:46609"/>
    </physiologicalReaction>
</comment>
<comment type="catalytic activity">
    <molecule>Isoform M1</molecule>
    <reaction evidence="16">
        <text>pyruvate + ATP = phosphoenolpyruvate + ADP + H(+)</text>
        <dbReference type="Rhea" id="RHEA:18157"/>
        <dbReference type="ChEBI" id="CHEBI:15361"/>
        <dbReference type="ChEBI" id="CHEBI:15378"/>
        <dbReference type="ChEBI" id="CHEBI:30616"/>
        <dbReference type="ChEBI" id="CHEBI:58702"/>
        <dbReference type="ChEBI" id="CHEBI:456216"/>
        <dbReference type="EC" id="2.7.1.40"/>
    </reaction>
</comment>
<comment type="cofactor">
    <cofactor evidence="39">
        <name>Mg(2+)</name>
        <dbReference type="ChEBI" id="CHEBI:18420"/>
    </cofactor>
</comment>
<comment type="cofactor">
    <cofactor evidence="39">
        <name>K(+)</name>
        <dbReference type="ChEBI" id="CHEBI:29103"/>
    </cofactor>
</comment>
<comment type="activity regulation">
    <molecule>Isoform M2</molecule>
    <text evidence="8 12 13 15 23 25 30">Isoform M2 is allosterically activated by D-fructose 1,6-bisphosphate (FBP) (PubMed:15996096, PubMed:18337815, PubMed:1854723, PubMed:2813362). Inhibited by oxalate and 3,3',5-triiodo-L-thyronine (T3) (PubMed:15996096). The activity of the tetrameric form is inhibited by PML (PubMed:18298799). Selective binding to tyrosine-phosphorylated peptides releases the allosteric activator FBP, leading to inhibition of PKM enzymatic activity, this diverts glucose metabolites from energy production to anabolic processes when cells are stimulated by certain growth factors (PubMed:18337815). Glycolytic flux are highly dependent on de novo biosynthesis of serine and glycine, and serine is a natural ligand and allosteric activator of isoform M2 (PubMed:23064226). Acetylation at Lys-433 promotes its translocation into the nucleus and homodimerization, promoting the protein kinase activity (PubMed:24120661).</text>
</comment>
<comment type="activity regulation">
    <molecule>Isoform M1</molecule>
    <text evidence="16">Has high pyruvate kinase activity by itself and does not require allosteric activation by D-fructose 1,6-bisphosphate (FBP) for activity.</text>
</comment>
<comment type="biophysicochemical properties">
    <kinetics>
        <KM evidence="8 15">2.7 mM for phosphoenolpyruvate (at 32 degrees Celsius, pH 8.0)</KM>
        <KM evidence="8 15">0.17 mM for phosphoenolpyruvate (in the presence of 2 mM D-fructose 1,6-bisphosphate (FBP), at 32 degrees Celsius, pH 8.0)</KM>
        <KM evidence="8 15">0.34 mM for ADP (at 32 degrees Celsius, pH 8.0)</KM>
        <KM evidence="8 15">0.24 mM for ADP (in the presence of 2 mM FBP, at 32 degrees Celsius, pH 8.0)</KM>
        <KM evidence="8 15">0.13 mM for phosphoenolpyruvate (in the presence of 2 mM FBP, at 25 degrees Celsius)</KM>
        <KM evidence="8 15">0.63 mM for ADP (in the presence of 2 mM FBP, at 25 degrees Celsius)</KM>
    </kinetics>
    <phDependence>
        <text evidence="8 15">Optimum pH for T3 binding is 6.0-6.5. Increase in pH causes T3 binding to drop, does not bind T3 above pH 9.0 or below pH 5.0.</text>
    </phDependence>
</comment>
<comment type="pathway">
    <text evidence="8 15">Carbohydrate degradation; glycolysis; pyruvate from D-glyceraldehyde 3-phosphate: step 5/5.</text>
</comment>
<comment type="subunit">
    <molecule>Isoform M2</molecule>
    <text evidence="5 8 11 12 13 15 17 18 20 21 23 25 26 28 29 30 32">Monomer and homotetramer; exists as a monomer in the absence of D-fructose 1,6-bisphosphate (FBP), and reversibly associates to form a homotetramer in the presence of FBP (PubMed:15996096, PubMed:18298799, PubMed:18337815, PubMed:1854723, PubMed:23064226, PubMed:2813362). The monomeric form binds 3,3',5-triiodo-L-thyronine (T3) (PubMed:15996096). Tetramer formation induces pyruvate kinase activity (PubMed:15996096, PubMed:18298799, PubMed:18337815, PubMed:1854723, PubMed:23064226, PubMed:2813362). The tetrameric form has high affinity for the substrate and is associated within the glycolytic enzyme complex (PubMed:15996096, PubMed:18298799, PubMed:18337815, PubMed:1854723, PubMed:23064226, PubMed:2813362). FBP stimulates the formation of tetramers from dimers (PubMed:15996096, PubMed:18298799, PubMed:18337815, PubMed:1854723, PubMed:23064226, PubMed:2813362). Homodimer; exists in a dimeric form in tumor cells and the dimeric form has less affinity for the phosphoenolpyruvate substrate (PubMed:22306293, PubMed:24120661). The homodimer converts into a protein kinase (PubMed:22306293, PubMed:24120661). Interacts with HERC1, POU5F1 and PML (PubMed:12650930, PubMed:18191611). Interacts with EGLN3; the interaction hydroxylates PKM under hypoxia and enhances binding to HIF1A (PubMed:21483450, PubMed:21620138). Interacts with HIF1A; the interaction is enhanced by binding of EGLN3, promoting enhanced transcription activity under hypoxia (PubMed:21620138). Interacts with TRIM35; this interaction prevents FGFR1-dependent tyrosine phosphorylation (PubMed:25263439). Interacts with JMJD8 (PubMed:27199445). Interacts with TRAF4 (PubMed:32268273). Interacts with (phosphorylated) CTNNB1; leading to activate transcription (PubMed:22056988). Interacts with TSC22D2; the interaction results in reduced nuclear levels of PKM isoform M2, leading to repression of cyclin CCND1 transcription and reduced cell growth (PubMed:27573352).</text>
</comment>
<comment type="subunit">
    <text evidence="25">(Microbial infection) Binding to certain oncoproteins such as HPV-16 E7 oncoprotein promotes homodimerization.</text>
</comment>
<comment type="interaction">
    <interactant intactId="EBI-353408">
        <id>P14618</id>
    </interactant>
    <interactant intactId="EBI-743313">
        <id>P49407</id>
        <label>ARRB1</label>
    </interactant>
    <organismsDiffer>false</organismsDiffer>
    <experiments>3</experiments>
</comment>
<comment type="interaction">
    <interactant intactId="EBI-353408">
        <id>P14618</id>
    </interactant>
    <interactant intactId="EBI-714559">
        <id>P32121</id>
        <label>ARRB2</label>
    </interactant>
    <organismsDiffer>false</organismsDiffer>
    <experiments>4</experiments>
</comment>
<comment type="interaction">
    <interactant intactId="EBI-353408">
        <id>P14618</id>
    </interactant>
    <interactant intactId="EBI-18924329">
        <id>Q96IK1-2</id>
        <label>BOD1</label>
    </interactant>
    <organismsDiffer>false</organismsDiffer>
    <experiments>3</experiments>
</comment>
<comment type="interaction">
    <interactant intactId="EBI-353408">
        <id>P14618</id>
    </interactant>
    <interactant intactId="EBI-491549">
        <id>P35222</id>
        <label>CTNNB1</label>
    </interactant>
    <organismsDiffer>false</organismsDiffer>
    <experiments>4</experiments>
</comment>
<comment type="interaction">
    <interactant intactId="EBI-353408">
        <id>P14618</id>
    </interactant>
    <interactant intactId="EBI-358616">
        <id>P53355</id>
        <label>DAPK1</label>
    </interactant>
    <organismsDiffer>false</organismsDiffer>
    <experiments>3</experiments>
</comment>
<comment type="interaction">
    <interactant intactId="EBI-353408">
        <id>P14618</id>
    </interactant>
    <interactant intactId="EBI-348399">
        <id>P22607</id>
        <label>FGFR3</label>
    </interactant>
    <organismsDiffer>false</organismsDiffer>
    <experiments>3</experiments>
</comment>
<comment type="interaction">
    <interactant intactId="EBI-353408">
        <id>P14618</id>
    </interactant>
    <interactant intactId="EBI-466029">
        <id>P42858</id>
        <label>HTT</label>
    </interactant>
    <organismsDiffer>false</organismsDiffer>
    <experiments>9</experiments>
</comment>
<comment type="interaction">
    <interactant intactId="EBI-353408">
        <id>P14618</id>
    </interactant>
    <interactant intactId="EBI-365996">
        <id>P04049</id>
        <label>RAF1</label>
    </interactant>
    <organismsDiffer>false</organismsDiffer>
    <experiments>3</experiments>
</comment>
<comment type="interaction">
    <interactant intactId="EBI-353408">
        <id>P14618</id>
    </interactant>
    <interactant intactId="EBI-752324">
        <id>Q8N488</id>
        <label>RYBP</label>
    </interactant>
    <organismsDiffer>false</organismsDiffer>
    <experiments>3</experiments>
</comment>
<comment type="interaction">
    <interactant intactId="EBI-353408">
        <id>P14618</id>
    </interactant>
    <interactant intactId="EBI-5235340">
        <id>Q7Z699</id>
        <label>SPRED1</label>
    </interactant>
    <organismsDiffer>false</organismsDiffer>
    <experiments>3</experiments>
</comment>
<comment type="interaction">
    <interactant intactId="EBI-353408">
        <id>P14618</id>
    </interactant>
    <interactant intactId="EBI-717399">
        <id>Q9BSI4</id>
        <label>TINF2</label>
    </interactant>
    <organismsDiffer>false</organismsDiffer>
    <experiments>2</experiments>
</comment>
<comment type="interaction">
    <interactant intactId="EBI-353408">
        <id>P14618</id>
    </interactant>
    <interactant intactId="EBI-741480">
        <id>Q9UMX0</id>
        <label>UBQLN1</label>
    </interactant>
    <organismsDiffer>false</organismsDiffer>
    <experiments>3</experiments>
</comment>
<comment type="interaction">
    <interactant intactId="EBI-353408">
        <id>P14618</id>
    </interactant>
    <interactant intactId="EBI-25900580">
        <id>Q9Y649</id>
    </interactant>
    <organismsDiffer>false</organismsDiffer>
    <experiments>3</experiments>
</comment>
<comment type="interaction">
    <interactant intactId="EBI-353408">
        <id>P14618</id>
    </interactant>
    <interactant intactId="EBI-710918">
        <id>Q9WMX2</id>
    </interactant>
    <organismsDiffer>true</organismsDiffer>
    <experiments>4</experiments>
</comment>
<comment type="interaction">
    <interactant intactId="EBI-4304679">
        <id>P14618-1</id>
    </interactant>
    <interactant intactId="EBI-491549">
        <id>P35222</id>
        <label>CTNNB1</label>
    </interactant>
    <organismsDiffer>false</organismsDiffer>
    <experiments>3</experiments>
</comment>
<comment type="interaction">
    <interactant intactId="EBI-4304679">
        <id>P14618-1</id>
    </interactant>
    <interactant intactId="EBI-358616">
        <id>P53355</id>
        <label>DAPK1</label>
    </interactant>
    <organismsDiffer>false</organismsDiffer>
    <experiments>2</experiments>
</comment>
<comment type="interaction">
    <interactant intactId="EBI-4304679">
        <id>P14618-1</id>
    </interactant>
    <interactant intactId="EBI-1175354">
        <id>Q9H6Z9</id>
        <label>EGLN3</label>
    </interactant>
    <organismsDiffer>false</organismsDiffer>
    <experiments>2</experiments>
</comment>
<comment type="interaction">
    <interactant intactId="EBI-4304679">
        <id>P14618-1</id>
    </interactant>
    <interactant intactId="EBI-79722">
        <id>P68431</id>
        <label>H3C12</label>
    </interactant>
    <organismsDiffer>false</organismsDiffer>
    <experiments>3</experiments>
</comment>
<comment type="interaction">
    <interactant intactId="EBI-4304679">
        <id>P14618-1</id>
    </interactant>
    <interactant intactId="EBI-447269">
        <id>Q16665</id>
        <label>HIF1A</label>
    </interactant>
    <organismsDiffer>false</organismsDiffer>
    <experiments>7</experiments>
</comment>
<comment type="interaction">
    <interactant intactId="EBI-4304679">
        <id>P14618-1</id>
    </interactant>
    <interactant intactId="EBI-73995">
        <id>P27361</id>
        <label>MAPK3</label>
    </interactant>
    <organismsDiffer>false</organismsDiffer>
    <experiments>3</experiments>
</comment>
<comment type="subcellular location">
    <molecule>Isoform M2</molecule>
    <subcellularLocation>
        <location evidence="26 27 29 32">Cytoplasm</location>
    </subcellularLocation>
    <subcellularLocation>
        <location evidence="10 11 20 22 25 27 29 32">Nucleus</location>
    </subcellularLocation>
    <text evidence="10 20 25 27">Translocates to the nucleus in response to various signals, such as EGF receptor activation or apoptotic stimuli (PubMed:17308100, PubMed:22056988, PubMed:24120661). Nuclear translocation is promoted by acetylation by EP300 (PubMed:24120661). Deacetylation by SIRT6 promotes its nuclear export in a process dependent of XPO4, thereby suppressing its ability to activate transcription and promote tumorigenesis (PubMed:26787900).</text>
</comment>
<comment type="subcellular location">
    <molecule>Isoform M1</molecule>
    <subcellularLocation>
        <location evidence="38">Cytoplasm</location>
    </subcellularLocation>
</comment>
<comment type="alternative products">
    <event type="alternative splicing"/>
    <isoform>
        <id>P14618-1</id>
        <name evidence="36">M2</name>
        <name>M2-PK</name>
        <name>PKM2</name>
        <sequence type="displayed"/>
    </isoform>
    <isoform>
        <id>P14618-2</id>
        <id>P14786-1</id>
        <name evidence="36">M1</name>
        <name>M1-PK</name>
        <name>PKM1</name>
        <sequence type="described" ref="VSP_011101"/>
    </isoform>
    <isoform>
        <id>P14618-3</id>
        <name>3</name>
        <sequence type="described" ref="VSP_043370"/>
    </isoform>
</comment>
<comment type="tissue specificity">
    <molecule>Isoform M2</molecule>
    <text evidence="11 14">Specifically expressed in proliferating cells, such as embryonic stem cells, embryonic carcinoma cells, as well as cancer cells.</text>
</comment>
<comment type="tissue specificity">
    <molecule>Isoform M1</molecule>
    <text evidence="14">Expressed in adult tissues (PubMed:18337823). Not expressed in tumor cells (PubMed:18337823).</text>
</comment>
<comment type="developmental stage">
    <molecule>Isoform M2</molecule>
    <text evidence="14">Specifically expressed during embryonic development.</text>
</comment>
<comment type="developmental stage">
    <molecule>Isoform M1</molecule>
    <text evidence="14">Specifically expressed in adult tissues.</text>
</comment>
<comment type="PTM">
    <text evidence="9">ISGylated.</text>
</comment>
<comment type="PTM">
    <text evidence="18">Under hypoxia, hydroxylated by EGLN3.</text>
</comment>
<comment type="PTM">
    <text evidence="19 33">Acetylation at Lys-305 is stimulated by high glucose concentration, it decreases enzyme activity and promotes its lysosomal-dependent degradation via chaperone-mediated autophagy.</text>
</comment>
<comment type="PTM">
    <molecule>Isoform M2</molecule>
    <text evidence="25 27">Acetylated at Lys-433 by EP300, leading to impair phosphoenolpyruvate substrate-binding and promote its homodimerization and subsequent translocation to the nucleus (PubMed:24120661). Deacetylation at Lys-433 by SIRT6 promotes its nuclear export into the cytoplasm, leading to suppress its nuclear localization and oncogenic function (PubMed:26787900).</text>
</comment>
<comment type="PTM">
    <molecule>Isoform M2</molecule>
    <text evidence="31">S-nitrosylation at Cys-423 and Cys-424 inhibits homotetramerization and pyruvate kinase activity (PubMed:30487609). S-nitrosylation is indirectly inhibited by AKR1A1 which degrades S-nitroso-CoA, a cofactor required to S-nitrosylate proteins (PubMed:30487609).</text>
</comment>
<comment type="PTM">
    <text evidence="26">FGFR1-dependent tyrosine phosphorylation is reduced by interaction with TRIM35.</text>
</comment>
<comment type="miscellaneous">
    <text>There are 4 isozymes of pyruvate kinase in mammals (L, R, M1, M2) encoded by 2 different genes: PKLR and PKM. The L and R isozymes are generated from the PKLR by differential splicing of RNA; the M1 and M2 forms are produced from the PKM gene by differential splicing. L type is major isozyme in the liver, R is found in red cells, M1 is the main form in muscle, heart and brain, and M2 is found in early fetal tissues as well as in most cancer cells.</text>
</comment>
<comment type="similarity">
    <text evidence="38">Belongs to the pyruvate kinase family.</text>
</comment>
<comment type="sequence caution" evidence="38">
    <conflict type="erroneous initiation">
        <sequence resource="EMBL-CDS" id="BAG57589"/>
    </conflict>
    <text>Extended N-terminus.</text>
</comment>
<comment type="online information" name="Wikipedia">
    <link uri="https://en.wikipedia.org/wiki/Pyruvate_kinase"/>
    <text>Pyruvate kinase entry</text>
</comment>
<comment type="online information" name="Atlas of Genetics and Cytogenetics in Oncology and Haematology">
    <link uri="https://atlasgeneticsoncology.org/gene/41728/PKM2"/>
</comment>
<proteinExistence type="evidence at protein level"/>
<gene>
    <name type="primary">PKM</name>
    <name evidence="37" type="synonym">OIP3</name>
    <name type="synonym">PK2</name>
    <name type="synonym">PK3</name>
    <name type="synonym">PKM2</name>
</gene>